<proteinExistence type="evidence at protein level"/>
<name>TCPB_HUMAN</name>
<reference key="1">
    <citation type="journal article" date="1998" name="Mol. Cell. Biol.">
        <title>Maturation of human cyclin E requires the function of eukaryotic chaperonin CCT.</title>
        <authorList>
            <person name="Won K.-A."/>
            <person name="Schumacher R.J."/>
            <person name="Farr G.W."/>
            <person name="Horwich A.L."/>
            <person name="Reed S.I."/>
        </authorList>
    </citation>
    <scope>NUCLEOTIDE SEQUENCE [MRNA] (ISOFORM 1)</scope>
</reference>
<reference key="2">
    <citation type="submission" date="1997-09" db="EMBL/GenBank/DDBJ databases">
        <title>Isolation and expression of a human novel cDNA homologous to the beta subunit of mouse CCT (chaperonin-containing TCP-1).</title>
        <authorList>
            <person name="Xin Y."/>
            <person name="Yu L."/>
            <person name="Bi A."/>
            <person name="Fan Y."/>
            <person name="Dai F."/>
            <person name="Zhang M."/>
            <person name="Zhang Q."/>
            <person name="Zhao S."/>
        </authorList>
    </citation>
    <scope>NUCLEOTIDE SEQUENCE [MRNA] (ISOFORM 1)</scope>
</reference>
<reference key="3">
    <citation type="submission" date="2003-05" db="EMBL/GenBank/DDBJ databases">
        <title>Cloning of human full-length CDSs in BD Creator(TM) system donor vector.</title>
        <authorList>
            <person name="Kalnine N."/>
            <person name="Chen X."/>
            <person name="Rolfs A."/>
            <person name="Halleck A."/>
            <person name="Hines L."/>
            <person name="Eisenstein S."/>
            <person name="Koundinya M."/>
            <person name="Raphael J."/>
            <person name="Moreira D."/>
            <person name="Kelley T."/>
            <person name="LaBaer J."/>
            <person name="Lin Y."/>
            <person name="Phelan M."/>
            <person name="Farmer A."/>
        </authorList>
    </citation>
    <scope>NUCLEOTIDE SEQUENCE [LARGE SCALE MRNA] (ISOFORM 1)</scope>
</reference>
<reference key="4">
    <citation type="journal article" date="2004" name="Nat. Genet.">
        <title>Complete sequencing and characterization of 21,243 full-length human cDNAs.</title>
        <authorList>
            <person name="Ota T."/>
            <person name="Suzuki Y."/>
            <person name="Nishikawa T."/>
            <person name="Otsuki T."/>
            <person name="Sugiyama T."/>
            <person name="Irie R."/>
            <person name="Wakamatsu A."/>
            <person name="Hayashi K."/>
            <person name="Sato H."/>
            <person name="Nagai K."/>
            <person name="Kimura K."/>
            <person name="Makita H."/>
            <person name="Sekine M."/>
            <person name="Obayashi M."/>
            <person name="Nishi T."/>
            <person name="Shibahara T."/>
            <person name="Tanaka T."/>
            <person name="Ishii S."/>
            <person name="Yamamoto J."/>
            <person name="Saito K."/>
            <person name="Kawai Y."/>
            <person name="Isono Y."/>
            <person name="Nakamura Y."/>
            <person name="Nagahari K."/>
            <person name="Murakami K."/>
            <person name="Yasuda T."/>
            <person name="Iwayanagi T."/>
            <person name="Wagatsuma M."/>
            <person name="Shiratori A."/>
            <person name="Sudo H."/>
            <person name="Hosoiri T."/>
            <person name="Kaku Y."/>
            <person name="Kodaira H."/>
            <person name="Kondo H."/>
            <person name="Sugawara M."/>
            <person name="Takahashi M."/>
            <person name="Kanda K."/>
            <person name="Yokoi T."/>
            <person name="Furuya T."/>
            <person name="Kikkawa E."/>
            <person name="Omura Y."/>
            <person name="Abe K."/>
            <person name="Kamihara K."/>
            <person name="Katsuta N."/>
            <person name="Sato K."/>
            <person name="Tanikawa M."/>
            <person name="Yamazaki M."/>
            <person name="Ninomiya K."/>
            <person name="Ishibashi T."/>
            <person name="Yamashita H."/>
            <person name="Murakawa K."/>
            <person name="Fujimori K."/>
            <person name="Tanai H."/>
            <person name="Kimata M."/>
            <person name="Watanabe M."/>
            <person name="Hiraoka S."/>
            <person name="Chiba Y."/>
            <person name="Ishida S."/>
            <person name="Ono Y."/>
            <person name="Takiguchi S."/>
            <person name="Watanabe S."/>
            <person name="Yosida M."/>
            <person name="Hotuta T."/>
            <person name="Kusano J."/>
            <person name="Kanehori K."/>
            <person name="Takahashi-Fujii A."/>
            <person name="Hara H."/>
            <person name="Tanase T.-O."/>
            <person name="Nomura Y."/>
            <person name="Togiya S."/>
            <person name="Komai F."/>
            <person name="Hara R."/>
            <person name="Takeuchi K."/>
            <person name="Arita M."/>
            <person name="Imose N."/>
            <person name="Musashino K."/>
            <person name="Yuuki H."/>
            <person name="Oshima A."/>
            <person name="Sasaki N."/>
            <person name="Aotsuka S."/>
            <person name="Yoshikawa Y."/>
            <person name="Matsunawa H."/>
            <person name="Ichihara T."/>
            <person name="Shiohata N."/>
            <person name="Sano S."/>
            <person name="Moriya S."/>
            <person name="Momiyama H."/>
            <person name="Satoh N."/>
            <person name="Takami S."/>
            <person name="Terashima Y."/>
            <person name="Suzuki O."/>
            <person name="Nakagawa S."/>
            <person name="Senoh A."/>
            <person name="Mizoguchi H."/>
            <person name="Goto Y."/>
            <person name="Shimizu F."/>
            <person name="Wakebe H."/>
            <person name="Hishigaki H."/>
            <person name="Watanabe T."/>
            <person name="Sugiyama A."/>
            <person name="Takemoto M."/>
            <person name="Kawakami B."/>
            <person name="Yamazaki M."/>
            <person name="Watanabe K."/>
            <person name="Kumagai A."/>
            <person name="Itakura S."/>
            <person name="Fukuzumi Y."/>
            <person name="Fujimori Y."/>
            <person name="Komiyama M."/>
            <person name="Tashiro H."/>
            <person name="Tanigami A."/>
            <person name="Fujiwara T."/>
            <person name="Ono T."/>
            <person name="Yamada K."/>
            <person name="Fujii Y."/>
            <person name="Ozaki K."/>
            <person name="Hirao M."/>
            <person name="Ohmori Y."/>
            <person name="Kawabata A."/>
            <person name="Hikiji T."/>
            <person name="Kobatake N."/>
            <person name="Inagaki H."/>
            <person name="Ikema Y."/>
            <person name="Okamoto S."/>
            <person name="Okitani R."/>
            <person name="Kawakami T."/>
            <person name="Noguchi S."/>
            <person name="Itoh T."/>
            <person name="Shigeta K."/>
            <person name="Senba T."/>
            <person name="Matsumura K."/>
            <person name="Nakajima Y."/>
            <person name="Mizuno T."/>
            <person name="Morinaga M."/>
            <person name="Sasaki M."/>
            <person name="Togashi T."/>
            <person name="Oyama M."/>
            <person name="Hata H."/>
            <person name="Watanabe M."/>
            <person name="Komatsu T."/>
            <person name="Mizushima-Sugano J."/>
            <person name="Satoh T."/>
            <person name="Shirai Y."/>
            <person name="Takahashi Y."/>
            <person name="Nakagawa K."/>
            <person name="Okumura K."/>
            <person name="Nagase T."/>
            <person name="Nomura N."/>
            <person name="Kikuchi H."/>
            <person name="Masuho Y."/>
            <person name="Yamashita R."/>
            <person name="Nakai K."/>
            <person name="Yada T."/>
            <person name="Nakamura Y."/>
            <person name="Ohara O."/>
            <person name="Isogai T."/>
            <person name="Sugano S."/>
        </authorList>
    </citation>
    <scope>NUCLEOTIDE SEQUENCE [LARGE SCALE MRNA] (ISOFORMS 1 AND 2)</scope>
    <source>
        <tissue>Amygdala</tissue>
        <tissue>Testis</tissue>
    </source>
</reference>
<reference key="5">
    <citation type="submission" date="2004-06" db="EMBL/GenBank/DDBJ databases">
        <title>Cloning of human full open reading frames in Gateway(TM) system entry vector (pDONR201).</title>
        <authorList>
            <person name="Ebert L."/>
            <person name="Schick M."/>
            <person name="Neubert P."/>
            <person name="Schatten R."/>
            <person name="Henze S."/>
            <person name="Korn B."/>
        </authorList>
    </citation>
    <scope>NUCLEOTIDE SEQUENCE [LARGE SCALE MRNA] (ISOFORM 1)</scope>
</reference>
<reference key="6">
    <citation type="journal article" date="2008" name="Nat. Methods">
        <title>Human protein factory for converting the transcriptome into an in vitro-expressed proteome.</title>
        <authorList>
            <person name="Goshima N."/>
            <person name="Kawamura Y."/>
            <person name="Fukumoto A."/>
            <person name="Miura A."/>
            <person name="Honma R."/>
            <person name="Satoh R."/>
            <person name="Wakamatsu A."/>
            <person name="Yamamoto J."/>
            <person name="Kimura K."/>
            <person name="Nishikawa T."/>
            <person name="Andoh T."/>
            <person name="Iida Y."/>
            <person name="Ishikawa K."/>
            <person name="Ito E."/>
            <person name="Kagawa N."/>
            <person name="Kaminaga C."/>
            <person name="Kanehori K."/>
            <person name="Kawakami B."/>
            <person name="Kenmochi K."/>
            <person name="Kimura R."/>
            <person name="Kobayashi M."/>
            <person name="Kuroita T."/>
            <person name="Kuwayama H."/>
            <person name="Maruyama Y."/>
            <person name="Matsuo K."/>
            <person name="Minami K."/>
            <person name="Mitsubori M."/>
            <person name="Mori M."/>
            <person name="Morishita R."/>
            <person name="Murase A."/>
            <person name="Nishikawa A."/>
            <person name="Nishikawa S."/>
            <person name="Okamoto T."/>
            <person name="Sakagami N."/>
            <person name="Sakamoto Y."/>
            <person name="Sasaki Y."/>
            <person name="Seki T."/>
            <person name="Sono S."/>
            <person name="Sugiyama A."/>
            <person name="Sumiya T."/>
            <person name="Takayama T."/>
            <person name="Takayama Y."/>
            <person name="Takeda H."/>
            <person name="Togashi T."/>
            <person name="Yahata K."/>
            <person name="Yamada H."/>
            <person name="Yanagisawa Y."/>
            <person name="Endo Y."/>
            <person name="Imamoto F."/>
            <person name="Kisu Y."/>
            <person name="Tanaka S."/>
            <person name="Isogai T."/>
            <person name="Imai J."/>
            <person name="Watanabe S."/>
            <person name="Nomura N."/>
        </authorList>
    </citation>
    <scope>NUCLEOTIDE SEQUENCE [LARGE SCALE MRNA] (ISOFORM 1)</scope>
</reference>
<reference key="7">
    <citation type="journal article" date="2006" name="Nature">
        <title>The finished DNA sequence of human chromosome 12.</title>
        <authorList>
            <person name="Scherer S.E."/>
            <person name="Muzny D.M."/>
            <person name="Buhay C.J."/>
            <person name="Chen R."/>
            <person name="Cree A."/>
            <person name="Ding Y."/>
            <person name="Dugan-Rocha S."/>
            <person name="Gill R."/>
            <person name="Gunaratne P."/>
            <person name="Harris R.A."/>
            <person name="Hawes A.C."/>
            <person name="Hernandez J."/>
            <person name="Hodgson A.V."/>
            <person name="Hume J."/>
            <person name="Jackson A."/>
            <person name="Khan Z.M."/>
            <person name="Kovar-Smith C."/>
            <person name="Lewis L.R."/>
            <person name="Lozado R.J."/>
            <person name="Metzker M.L."/>
            <person name="Milosavljevic A."/>
            <person name="Miner G.R."/>
            <person name="Montgomery K.T."/>
            <person name="Morgan M.B."/>
            <person name="Nazareth L.V."/>
            <person name="Scott G."/>
            <person name="Sodergren E."/>
            <person name="Song X.-Z."/>
            <person name="Steffen D."/>
            <person name="Lovering R.C."/>
            <person name="Wheeler D.A."/>
            <person name="Worley K.C."/>
            <person name="Yuan Y."/>
            <person name="Zhang Z."/>
            <person name="Adams C.Q."/>
            <person name="Ansari-Lari M.A."/>
            <person name="Ayele M."/>
            <person name="Brown M.J."/>
            <person name="Chen G."/>
            <person name="Chen Z."/>
            <person name="Clerc-Blankenburg K.P."/>
            <person name="Davis C."/>
            <person name="Delgado O."/>
            <person name="Dinh H.H."/>
            <person name="Draper H."/>
            <person name="Gonzalez-Garay M.L."/>
            <person name="Havlak P."/>
            <person name="Jackson L.R."/>
            <person name="Jacob L.S."/>
            <person name="Kelly S.H."/>
            <person name="Li L."/>
            <person name="Li Z."/>
            <person name="Liu J."/>
            <person name="Liu W."/>
            <person name="Lu J."/>
            <person name="Maheshwari M."/>
            <person name="Nguyen B.-V."/>
            <person name="Okwuonu G.O."/>
            <person name="Pasternak S."/>
            <person name="Perez L.M."/>
            <person name="Plopper F.J.H."/>
            <person name="Santibanez J."/>
            <person name="Shen H."/>
            <person name="Tabor P.E."/>
            <person name="Verduzco D."/>
            <person name="Waldron L."/>
            <person name="Wang Q."/>
            <person name="Williams G.A."/>
            <person name="Zhang J."/>
            <person name="Zhou J."/>
            <person name="Allen C.C."/>
            <person name="Amin A.G."/>
            <person name="Anyalebechi V."/>
            <person name="Bailey M."/>
            <person name="Barbaria J.A."/>
            <person name="Bimage K.E."/>
            <person name="Bryant N.P."/>
            <person name="Burch P.E."/>
            <person name="Burkett C.E."/>
            <person name="Burrell K.L."/>
            <person name="Calderon E."/>
            <person name="Cardenas V."/>
            <person name="Carter K."/>
            <person name="Casias K."/>
            <person name="Cavazos I."/>
            <person name="Cavazos S.R."/>
            <person name="Ceasar H."/>
            <person name="Chacko J."/>
            <person name="Chan S.N."/>
            <person name="Chavez D."/>
            <person name="Christopoulos C."/>
            <person name="Chu J."/>
            <person name="Cockrell R."/>
            <person name="Cox C.D."/>
            <person name="Dang M."/>
            <person name="Dathorne S.R."/>
            <person name="David R."/>
            <person name="Davis C.M."/>
            <person name="Davy-Carroll L."/>
            <person name="Deshazo D.R."/>
            <person name="Donlin J.E."/>
            <person name="D'Souza L."/>
            <person name="Eaves K.A."/>
            <person name="Egan A."/>
            <person name="Emery-Cohen A.J."/>
            <person name="Escotto M."/>
            <person name="Flagg N."/>
            <person name="Forbes L.D."/>
            <person name="Gabisi A.M."/>
            <person name="Garza M."/>
            <person name="Hamilton C."/>
            <person name="Henderson N."/>
            <person name="Hernandez O."/>
            <person name="Hines S."/>
            <person name="Hogues M.E."/>
            <person name="Huang M."/>
            <person name="Idlebird D.G."/>
            <person name="Johnson R."/>
            <person name="Jolivet A."/>
            <person name="Jones S."/>
            <person name="Kagan R."/>
            <person name="King L.M."/>
            <person name="Leal B."/>
            <person name="Lebow H."/>
            <person name="Lee S."/>
            <person name="LeVan J.M."/>
            <person name="Lewis L.C."/>
            <person name="London P."/>
            <person name="Lorensuhewa L.M."/>
            <person name="Loulseged H."/>
            <person name="Lovett D.A."/>
            <person name="Lucier A."/>
            <person name="Lucier R.L."/>
            <person name="Ma J."/>
            <person name="Madu R.C."/>
            <person name="Mapua P."/>
            <person name="Martindale A.D."/>
            <person name="Martinez E."/>
            <person name="Massey E."/>
            <person name="Mawhiney S."/>
            <person name="Meador M.G."/>
            <person name="Mendez S."/>
            <person name="Mercado C."/>
            <person name="Mercado I.C."/>
            <person name="Merritt C.E."/>
            <person name="Miner Z.L."/>
            <person name="Minja E."/>
            <person name="Mitchell T."/>
            <person name="Mohabbat F."/>
            <person name="Mohabbat K."/>
            <person name="Montgomery B."/>
            <person name="Moore N."/>
            <person name="Morris S."/>
            <person name="Munidasa M."/>
            <person name="Ngo R.N."/>
            <person name="Nguyen N.B."/>
            <person name="Nickerson E."/>
            <person name="Nwaokelemeh O.O."/>
            <person name="Nwokenkwo S."/>
            <person name="Obregon M."/>
            <person name="Oguh M."/>
            <person name="Oragunye N."/>
            <person name="Oviedo R.J."/>
            <person name="Parish B.J."/>
            <person name="Parker D.N."/>
            <person name="Parrish J."/>
            <person name="Parks K.L."/>
            <person name="Paul H.A."/>
            <person name="Payton B.A."/>
            <person name="Perez A."/>
            <person name="Perrin W."/>
            <person name="Pickens A."/>
            <person name="Primus E.L."/>
            <person name="Pu L.-L."/>
            <person name="Puazo M."/>
            <person name="Quiles M.M."/>
            <person name="Quiroz J.B."/>
            <person name="Rabata D."/>
            <person name="Reeves K."/>
            <person name="Ruiz S.J."/>
            <person name="Shao H."/>
            <person name="Sisson I."/>
            <person name="Sonaike T."/>
            <person name="Sorelle R.P."/>
            <person name="Sutton A.E."/>
            <person name="Svatek A.F."/>
            <person name="Svetz L.A."/>
            <person name="Tamerisa K.S."/>
            <person name="Taylor T.R."/>
            <person name="Teague B."/>
            <person name="Thomas N."/>
            <person name="Thorn R.D."/>
            <person name="Trejos Z.Y."/>
            <person name="Trevino B.K."/>
            <person name="Ukegbu O.N."/>
            <person name="Urban J.B."/>
            <person name="Vasquez L.I."/>
            <person name="Vera V.A."/>
            <person name="Villasana D.M."/>
            <person name="Wang L."/>
            <person name="Ward-Moore S."/>
            <person name="Warren J.T."/>
            <person name="Wei X."/>
            <person name="White F."/>
            <person name="Williamson A.L."/>
            <person name="Wleczyk R."/>
            <person name="Wooden H.S."/>
            <person name="Wooden S.H."/>
            <person name="Yen J."/>
            <person name="Yoon L."/>
            <person name="Yoon V."/>
            <person name="Zorrilla S.E."/>
            <person name="Nelson D."/>
            <person name="Kucherlapati R."/>
            <person name="Weinstock G."/>
            <person name="Gibbs R.A."/>
        </authorList>
    </citation>
    <scope>NUCLEOTIDE SEQUENCE [LARGE SCALE GENOMIC DNA]</scope>
</reference>
<reference key="8">
    <citation type="submission" date="2005-07" db="EMBL/GenBank/DDBJ databases">
        <authorList>
            <person name="Mural R.J."/>
            <person name="Istrail S."/>
            <person name="Sutton G."/>
            <person name="Florea L."/>
            <person name="Halpern A.L."/>
            <person name="Mobarry C.M."/>
            <person name="Lippert R."/>
            <person name="Walenz B."/>
            <person name="Shatkay H."/>
            <person name="Dew I."/>
            <person name="Miller J.R."/>
            <person name="Flanigan M.J."/>
            <person name="Edwards N.J."/>
            <person name="Bolanos R."/>
            <person name="Fasulo D."/>
            <person name="Halldorsson B.V."/>
            <person name="Hannenhalli S."/>
            <person name="Turner R."/>
            <person name="Yooseph S."/>
            <person name="Lu F."/>
            <person name="Nusskern D.R."/>
            <person name="Shue B.C."/>
            <person name="Zheng X.H."/>
            <person name="Zhong F."/>
            <person name="Delcher A.L."/>
            <person name="Huson D.H."/>
            <person name="Kravitz S.A."/>
            <person name="Mouchard L."/>
            <person name="Reinert K."/>
            <person name="Remington K.A."/>
            <person name="Clark A.G."/>
            <person name="Waterman M.S."/>
            <person name="Eichler E.E."/>
            <person name="Adams M.D."/>
            <person name="Hunkapiller M.W."/>
            <person name="Myers E.W."/>
            <person name="Venter J.C."/>
        </authorList>
    </citation>
    <scope>NUCLEOTIDE SEQUENCE [LARGE SCALE GENOMIC DNA]</scope>
</reference>
<reference key="9">
    <citation type="journal article" date="2004" name="Genome Res.">
        <title>The status, quality, and expansion of the NIH full-length cDNA project: the Mammalian Gene Collection (MGC).</title>
        <authorList>
            <consortium name="The MGC Project Team"/>
        </authorList>
    </citation>
    <scope>NUCLEOTIDE SEQUENCE [LARGE SCALE MRNA] (ISOFORM 1)</scope>
    <source>
        <tissue>Brain</tissue>
    </source>
</reference>
<reference key="10">
    <citation type="submission" date="1997-03" db="EMBL/GenBank/DDBJ databases">
        <authorList>
            <person name="Adams M.D."/>
            <person name="Loftus B.J."/>
            <person name="Zhou L."/>
            <person name="Phillips C."/>
            <person name="Brandon R."/>
            <person name="Fuhrmann J."/>
            <person name="Kim U.J."/>
            <person name="Kerlavage A.R."/>
            <person name="Venter J.C."/>
        </authorList>
    </citation>
    <scope>NUCLEOTIDE SEQUENCE [GENOMIC DNA] OF 1-217</scope>
</reference>
<reference key="11">
    <citation type="journal article" date="2003" name="Nat. Biotechnol.">
        <title>Exploring proteomes and analyzing protein processing by mass spectrometric identification of sorted N-terminal peptides.</title>
        <authorList>
            <person name="Gevaert K."/>
            <person name="Goethals M."/>
            <person name="Martens L."/>
            <person name="Van Damme J."/>
            <person name="Staes A."/>
            <person name="Thomas G.R."/>
            <person name="Vandekerckhove J."/>
        </authorList>
    </citation>
    <scope>PROTEIN SEQUENCE OF 2-20</scope>
    <source>
        <tissue>Platelet</tissue>
    </source>
</reference>
<reference key="12">
    <citation type="submission" date="2004-05" db="UniProtKB">
        <authorList>
            <person name="Bienvenut W.V."/>
            <person name="Potts A."/>
            <person name="Quadroni M."/>
        </authorList>
    </citation>
    <scope>PROTEIN SEQUENCE OF 2-13</scope>
    <scope>ACETYLATION AT ALA-2</scope>
    <scope>IDENTIFICATION BY MASS SPECTROMETRY</scope>
    <source>
        <tissue>B-cell lymphoma</tissue>
    </source>
</reference>
<reference key="13">
    <citation type="submission" date="2008-12" db="UniProtKB">
        <authorList>
            <person name="Lubec G."/>
            <person name="Afjehi-Sadat L."/>
            <person name="Chen W.-Q."/>
            <person name="Sun Y."/>
        </authorList>
    </citation>
    <scope>PROTEIN SEQUENCE OF 26-40; 58-72; 83-131; 139-154; 157-170; 182-189; 192-203; 205-222; 237-250; 285-342; 348-354; 359-402; 406-427; 432-441; 445-466; 482-500 AND 502-516</scope>
    <scope>IDENTIFICATION BY MASS SPECTROMETRY</scope>
    <source>
        <tissue>Brain</tissue>
        <tissue>Cajal-Retzius cell</tissue>
        <tissue>Fetal brain cortex</tissue>
    </source>
</reference>
<reference key="14">
    <citation type="journal article" date="2003" name="J. Biol. Chem.">
        <title>A product of the human gene adjacent to parkin is a component of Lewy bodies and suppresses Pael receptor-induced cell death.</title>
        <authorList>
            <person name="Imai Y."/>
            <person name="Soda M."/>
            <person name="Murakami T."/>
            <person name="Shoji M."/>
            <person name="Abe K."/>
            <person name="Takahashi R."/>
        </authorList>
    </citation>
    <scope>INTERACTION WITH PACRG</scope>
</reference>
<reference key="15">
    <citation type="journal article" date="2003" name="Nature">
        <title>Proteomic characterization of the human centrosome by protein correlation profiling.</title>
        <authorList>
            <person name="Andersen J.S."/>
            <person name="Wilkinson C.J."/>
            <person name="Mayor T."/>
            <person name="Mortensen P."/>
            <person name="Nigg E.A."/>
            <person name="Mann M."/>
        </authorList>
    </citation>
    <scope>IDENTIFICATION BY MASS SPECTROMETRY</scope>
    <source>
        <tissue>Lymphoblast</tissue>
    </source>
</reference>
<reference key="16">
    <citation type="journal article" date="2009" name="Anal. Chem.">
        <title>Lys-N and trypsin cover complementary parts of the phosphoproteome in a refined SCX-based approach.</title>
        <authorList>
            <person name="Gauci S."/>
            <person name="Helbig A.O."/>
            <person name="Slijper M."/>
            <person name="Krijgsveld J."/>
            <person name="Heck A.J."/>
            <person name="Mohammed S."/>
        </authorList>
    </citation>
    <scope>ACETYLATION [LARGE SCALE ANALYSIS] AT ALA-2</scope>
    <scope>CLEAVAGE OF INITIATOR METHIONINE [LARGE SCALE ANALYSIS]</scope>
    <scope>IDENTIFICATION BY MASS SPECTROMETRY [LARGE SCALE ANALYSIS]</scope>
</reference>
<reference key="17">
    <citation type="journal article" date="2009" name="Science">
        <title>Lysine acetylation targets protein complexes and co-regulates major cellular functions.</title>
        <authorList>
            <person name="Choudhary C."/>
            <person name="Kumar C."/>
            <person name="Gnad F."/>
            <person name="Nielsen M.L."/>
            <person name="Rehman M."/>
            <person name="Walther T.C."/>
            <person name="Olsen J.V."/>
            <person name="Mann M."/>
        </authorList>
    </citation>
    <scope>ACETYLATION [LARGE SCALE ANALYSIS] AT LYS-13; LYS-154 AND LYS-181</scope>
    <scope>IDENTIFICATION BY MASS SPECTROMETRY [LARGE SCALE ANALYSIS]</scope>
</reference>
<reference key="18">
    <citation type="journal article" date="2010" name="Proc. Natl. Acad. Sci. U.S.A.">
        <title>BBS6, BBS10, and BBS12 form a complex with CCT/TRiC family chaperonins and mediate BBSome assembly.</title>
        <authorList>
            <person name="Seo S."/>
            <person name="Baye L.M."/>
            <person name="Schulz N.P."/>
            <person name="Beck J.S."/>
            <person name="Zhang Q."/>
            <person name="Slusarski D.C."/>
            <person name="Sheffield V.C."/>
        </authorList>
    </citation>
    <scope>FUNCTION</scope>
    <scope>SUBCELLULAR LOCATION</scope>
    <scope>IDENTIFICATION IN THE CHAPERONIN-CONTAINING T-COMPLEX</scope>
</reference>
<reference key="19">
    <citation type="journal article" date="2010" name="Sci. Signal.">
        <title>Quantitative phosphoproteomics reveals widespread full phosphorylation site occupancy during mitosis.</title>
        <authorList>
            <person name="Olsen J.V."/>
            <person name="Vermeulen M."/>
            <person name="Santamaria A."/>
            <person name="Kumar C."/>
            <person name="Miller M.L."/>
            <person name="Jensen L.J."/>
            <person name="Gnad F."/>
            <person name="Cox J."/>
            <person name="Jensen T.S."/>
            <person name="Nigg E.A."/>
            <person name="Brunak S."/>
            <person name="Mann M."/>
        </authorList>
    </citation>
    <scope>ACETYLATION [LARGE SCALE ANALYSIS] AT ALA-2</scope>
    <scope>PHOSPHORYLATION [LARGE SCALE ANALYSIS] AT SER-3</scope>
    <scope>CLEAVAGE OF INITIATOR METHIONINE [LARGE SCALE ANALYSIS]</scope>
    <scope>IDENTIFICATION BY MASS SPECTROMETRY [LARGE SCALE ANALYSIS]</scope>
    <source>
        <tissue>Cervix carcinoma</tissue>
    </source>
</reference>
<reference key="20">
    <citation type="journal article" date="2011" name="BMC Syst. Biol.">
        <title>Initial characterization of the human central proteome.</title>
        <authorList>
            <person name="Burkard T.R."/>
            <person name="Planyavsky M."/>
            <person name="Kaupe I."/>
            <person name="Breitwieser F.P."/>
            <person name="Buerckstuemmer T."/>
            <person name="Bennett K.L."/>
            <person name="Superti-Furga G."/>
            <person name="Colinge J."/>
        </authorList>
    </citation>
    <scope>IDENTIFICATION BY MASS SPECTROMETRY [LARGE SCALE ANALYSIS]</scope>
</reference>
<reference key="21">
    <citation type="journal article" date="2011" name="Sci. Signal.">
        <title>System-wide temporal characterization of the proteome and phosphoproteome of human embryonic stem cell differentiation.</title>
        <authorList>
            <person name="Rigbolt K.T."/>
            <person name="Prokhorova T.A."/>
            <person name="Akimov V."/>
            <person name="Henningsen J."/>
            <person name="Johansen P.T."/>
            <person name="Kratchmarova I."/>
            <person name="Kassem M."/>
            <person name="Mann M."/>
            <person name="Olsen J.V."/>
            <person name="Blagoev B."/>
        </authorList>
    </citation>
    <scope>ACETYLATION [LARGE SCALE ANALYSIS] AT ALA-2</scope>
    <scope>PHOSPHORYLATION [LARGE SCALE ANALYSIS] AT SER-3; SER-260 AND THR-261</scope>
    <scope>CLEAVAGE OF INITIATOR METHIONINE [LARGE SCALE ANALYSIS]</scope>
    <scope>IDENTIFICATION BY MASS SPECTROMETRY [LARGE SCALE ANALYSIS]</scope>
</reference>
<reference key="22">
    <citation type="journal article" date="2012" name="Mol. Cell. Proteomics">
        <title>Comparative large-scale characterisation of plant vs. mammal proteins reveals similar and idiosyncratic N-alpha acetylation features.</title>
        <authorList>
            <person name="Bienvenut W.V."/>
            <person name="Sumpton D."/>
            <person name="Martinez A."/>
            <person name="Lilla S."/>
            <person name="Espagne C."/>
            <person name="Meinnel T."/>
            <person name="Giglione C."/>
        </authorList>
    </citation>
    <scope>ACETYLATION [LARGE SCALE ANALYSIS] AT ALA-2</scope>
    <scope>CLEAVAGE OF INITIATOR METHIONINE [LARGE SCALE ANALYSIS]</scope>
    <scope>IDENTIFICATION BY MASS SPECTROMETRY [LARGE SCALE ANALYSIS]</scope>
</reference>
<reference key="23">
    <citation type="journal article" date="2012" name="Proc. Natl. Acad. Sci. U.S.A.">
        <title>N-terminal acetylome analyses and functional insights of the N-terminal acetyltransferase NatB.</title>
        <authorList>
            <person name="Van Damme P."/>
            <person name="Lasa M."/>
            <person name="Polevoda B."/>
            <person name="Gazquez C."/>
            <person name="Elosegui-Artola A."/>
            <person name="Kim D.S."/>
            <person name="De Juan-Pardo E."/>
            <person name="Demeyer K."/>
            <person name="Hole K."/>
            <person name="Larrea E."/>
            <person name="Timmerman E."/>
            <person name="Prieto J."/>
            <person name="Arnesen T."/>
            <person name="Sherman F."/>
            <person name="Gevaert K."/>
            <person name="Aldabe R."/>
        </authorList>
    </citation>
    <scope>ACETYLATION [LARGE SCALE ANALYSIS] AT ALA-2</scope>
    <scope>ACETYLATION [LARGE SCALE ANALYSIS] AT MET-1 (ISOFORM 2)</scope>
    <scope>CLEAVAGE OF INITIATOR METHIONINE [LARGE SCALE ANALYSIS]</scope>
    <scope>IDENTIFICATION BY MASS SPECTROMETRY [LARGE SCALE ANALYSIS]</scope>
</reference>
<reference key="24">
    <citation type="journal article" date="2014" name="Cell">
        <title>Proteostatic control of telomerase function through TRiC-mediated folding of TCAB1.</title>
        <authorList>
            <person name="Freund A."/>
            <person name="Zhong F.L."/>
            <person name="Venteicher A.S."/>
            <person name="Meng Z."/>
            <person name="Veenstra T.D."/>
            <person name="Frydman J."/>
            <person name="Artandi S.E."/>
        </authorList>
    </citation>
    <scope>FUNCTION</scope>
    <scope>IDENTIFICATION IN THE CHAPERONIN-CONTAINING T-COMPLEX</scope>
</reference>
<reference key="25">
    <citation type="journal article" date="2013" name="J. Proteome Res.">
        <title>Toward a comprehensive characterization of a human cancer cell phosphoproteome.</title>
        <authorList>
            <person name="Zhou H."/>
            <person name="Di Palma S."/>
            <person name="Preisinger C."/>
            <person name="Peng M."/>
            <person name="Polat A.N."/>
            <person name="Heck A.J."/>
            <person name="Mohammed S."/>
        </authorList>
    </citation>
    <scope>PHOSPHORYLATION [LARGE SCALE ANALYSIS] AT SER-3 AND SER-60</scope>
    <scope>IDENTIFICATION BY MASS SPECTROMETRY [LARGE SCALE ANALYSIS]</scope>
    <source>
        <tissue>Erythroleukemia</tissue>
    </source>
</reference>
<reference key="26">
    <citation type="journal article" date="2014" name="J. Proteomics">
        <title>An enzyme assisted RP-RPLC approach for in-depth analysis of human liver phosphoproteome.</title>
        <authorList>
            <person name="Bian Y."/>
            <person name="Song C."/>
            <person name="Cheng K."/>
            <person name="Dong M."/>
            <person name="Wang F."/>
            <person name="Huang J."/>
            <person name="Sun D."/>
            <person name="Wang L."/>
            <person name="Ye M."/>
            <person name="Zou H."/>
        </authorList>
    </citation>
    <scope>IDENTIFICATION BY MASS SPECTROMETRY [LARGE SCALE ANALYSIS]</scope>
    <source>
        <tissue>Liver</tissue>
    </source>
</reference>
<reference key="27">
    <citation type="journal article" date="2015" name="Proteomics">
        <title>N-terminome analysis of the human mitochondrial proteome.</title>
        <authorList>
            <person name="Vaca Jacome A.S."/>
            <person name="Rabilloud T."/>
            <person name="Schaeffer-Reiss C."/>
            <person name="Rompais M."/>
            <person name="Ayoub D."/>
            <person name="Lane L."/>
            <person name="Bairoch A."/>
            <person name="Van Dorsselaer A."/>
            <person name="Carapito C."/>
        </authorList>
    </citation>
    <scope>IDENTIFICATION BY MASS SPECTROMETRY [LARGE SCALE ANALYSIS]</scope>
</reference>
<reference key="28">
    <citation type="journal article" date="2016" name="Nat. Commun.">
        <title>The FNIP co-chaperones decelerate the Hsp90 chaperone cycle and enhance drug binding.</title>
        <authorList>
            <person name="Woodford M.R."/>
            <person name="Dunn D.M."/>
            <person name="Blanden A.R."/>
            <person name="Capriotti D."/>
            <person name="Loiselle D."/>
            <person name="Prodromou C."/>
            <person name="Panaretou B."/>
            <person name="Hughes P.F."/>
            <person name="Smith A."/>
            <person name="Ackerman W."/>
            <person name="Haystead T.A."/>
            <person name="Loh S.N."/>
            <person name="Bourboulia D."/>
            <person name="Schmidt L.S."/>
            <person name="Marston Linehan W."/>
            <person name="Bratslavsky G."/>
            <person name="Mollapour M."/>
        </authorList>
    </citation>
    <scope>INTERACTION WITH FLCN</scope>
</reference>
<reference key="29">
    <citation type="journal article" date="2017" name="Nat. Struct. Mol. Biol.">
        <title>Site-specific mapping of the human SUMO proteome reveals co-modification with phosphorylation.</title>
        <authorList>
            <person name="Hendriks I.A."/>
            <person name="Lyon D."/>
            <person name="Young C."/>
            <person name="Jensen L.J."/>
            <person name="Vertegaal A.C."/>
            <person name="Nielsen M.L."/>
        </authorList>
    </citation>
    <scope>SUMOYLATION [LARGE SCALE ANALYSIS] AT LYS-248</scope>
    <scope>IDENTIFICATION BY MASS SPECTROMETRY [LARGE SCALE ANALYSIS]</scope>
</reference>
<reference key="30">
    <citation type="journal article" date="2020" name="Sci. Rep.">
        <title>Dlec1 is required for spermatogenesis and male fertility in mice.</title>
        <authorList>
            <person name="Okitsu Y."/>
            <person name="Nagano M."/>
            <person name="Yamagata T."/>
            <person name="Ito C."/>
            <person name="Toshimori K."/>
            <person name="Dohra H."/>
            <person name="Fujii W."/>
            <person name="Yogo K."/>
        </authorList>
    </citation>
    <scope>INTERACTION WITH DLEC1</scope>
</reference>
<reference evidence="24 25 26 27 28" key="31">
    <citation type="journal article" date="2022" name="Cell">
        <title>Structural visualization of the tubulin folding pathway directed by human chaperonin TRiC/CCT.</title>
        <authorList>
            <person name="Gestaut D."/>
            <person name="Zhao Y."/>
            <person name="Park J."/>
            <person name="Ma B."/>
            <person name="Leitner A."/>
            <person name="Collier M."/>
            <person name="Pintilie G."/>
            <person name="Roh S.H."/>
            <person name="Chiu W."/>
            <person name="Frydman J."/>
        </authorList>
    </citation>
    <scope>STRUCTURE BY ELECTRON MICROSCOPY (2.90 ANGSTROMS) IN COMPLEX WITH TUBULIN</scope>
    <scope>FUNCTION</scope>
    <scope>SUBUNIT</scope>
    <scope>ADP AND MG(2+) BINDING SITES</scope>
    <scope>CATALYTIC ACTIVITY</scope>
</reference>
<reference evidence="20 21 22 23" key="32">
    <citation type="journal article" date="2022" name="Nat. Struct. Mol. Biol.">
        <title>Snapshots of actin and tubulin folding inside the TRiC chaperonin.</title>
        <authorList>
            <person name="Kelly J.J."/>
            <person name="Tranter D."/>
            <person name="Pardon E."/>
            <person name="Chi G."/>
            <person name="Kramer H."/>
            <person name="Happonen L."/>
            <person name="Knee K.M."/>
            <person name="Janz J.M."/>
            <person name="Steyaert J."/>
            <person name="Bulawa C."/>
            <person name="Paavilainen V.O."/>
            <person name="Huiskonen J.T."/>
            <person name="Yue W.W."/>
        </authorList>
    </citation>
    <scope>STRUCTURE BY ELECTRON MICROSCOPY (2.50 ANGSTROMS) IN COMPLEX WITH TUBULIN AND IN COMPLEX WITH ACTIN</scope>
    <scope>FUNCTION</scope>
    <scope>SUBUNIT</scope>
    <scope>ADP AND MG(2+) BINDING SITES</scope>
    <scope>CATALYTIC ACTIVITY</scope>
</reference>
<reference evidence="29 30 31 32 33 34 35 36" key="33">
    <citation type="journal article" date="2023" name="Commun. Biol.">
        <title>Pathway and mechanism of tubulin folding mediated by TRiC/CCT along its ATPase cycle revealed using cryo-EM.</title>
        <authorList>
            <person name="Liu C."/>
            <person name="Jin M."/>
            <person name="Wang S."/>
            <person name="Han W."/>
            <person name="Zhao Q."/>
            <person name="Wang Y."/>
            <person name="Xu C."/>
            <person name="Diao L."/>
            <person name="Yin Y."/>
            <person name="Peng C."/>
            <person name="Peng C."/>
            <person name="Bao L."/>
            <person name="Wang Y."/>
            <person name="Cong Y."/>
        </authorList>
    </citation>
    <scope>STRUCTURE BY ELECTRON MICROSCOPY (3.10 ANGSTROMS) IN COMPLEX WITH TUBULIN</scope>
    <scope>FUNCTION</scope>
    <scope>SUBUNIT</scope>
    <scope>ATP; ADP AND MG(2+) BINDING SITES</scope>
    <scope>CATALYTIC ACTIVITY</scope>
</reference>
<protein>
    <recommendedName>
        <fullName>T-complex protein 1 subunit beta</fullName>
        <shortName>TCP-1-beta</shortName>
        <ecNumber evidence="15 16 17">3.6.1.-</ecNumber>
    </recommendedName>
    <alternativeName>
        <fullName evidence="19">CCT-beta</fullName>
    </alternativeName>
    <alternativeName>
        <fullName evidence="19">Chaperonin containing T-complex polypeptide 1 subunit 2</fullName>
    </alternativeName>
</protein>
<accession>P78371</accession>
<accession>A8K402</accession>
<accession>B5BTY7</accession>
<accession>B7Z243</accession>
<accession>B7Z7K4</accession>
<accession>B7ZAT2</accession>
<accession>Q14D36</accession>
<accession>Q6IAT3</accession>
<sequence length="535" mass="57488">MASLSLAPVNIFKAGADEERAETARLTSFIGAIAIGDLVKSTLGPKGMDKILLSSGRDASLMVTNDGATILKNIGVDNPAAKVLVDMSRVQDDEVGDGTTSVTVLAAELLREAESLIAKKIHPQTIIAGWREATKAAREALLSSAVDHGSDEVKFRQDLMNIAGTTLSSKLLTHHKDHFTKLAVEAVLRLKGSGNLEAIHIIKKLGGSLADSYLDEGFLLDKKIGVNQPKRIENAKILIANTGMDTDKIKIFGSRVRVDSTAKVAEIEHAEKEKMKEKVERILKHGINCFINRQLIYNYPEQLFGAAGVMAIEHADFAGVERLALVTGGEIASTFDHPELVKLGSCKLIEEVMIGEDKLIHFSGVALGEACTIVLRGATQQILDEAERSLHDALCVLAQTVKDSRTVYGGGCSEMLMAHAVTQLANRTPGKEAVAMESYAKALRMLPTIIADNAGYDSADLVAQLRAAHSEGNTTAGLDMREGTIGDMAILGITESFQVKRQVLLSAAEAAEVILRVDNIIKAAPRKRVPDHHPC</sequence>
<organism>
    <name type="scientific">Homo sapiens</name>
    <name type="common">Human</name>
    <dbReference type="NCBI Taxonomy" id="9606"/>
    <lineage>
        <taxon>Eukaryota</taxon>
        <taxon>Metazoa</taxon>
        <taxon>Chordata</taxon>
        <taxon>Craniata</taxon>
        <taxon>Vertebrata</taxon>
        <taxon>Euteleostomi</taxon>
        <taxon>Mammalia</taxon>
        <taxon>Eutheria</taxon>
        <taxon>Euarchontoglires</taxon>
        <taxon>Primates</taxon>
        <taxon>Haplorrhini</taxon>
        <taxon>Catarrhini</taxon>
        <taxon>Hominidae</taxon>
        <taxon>Homo</taxon>
    </lineage>
</organism>
<comment type="function">
    <text evidence="4 5 8 9 10">Component of the chaperonin-containing T-complex (TRiC), a molecular chaperone complex that assists the folding of actin, tubulin and other proteins upon ATP hydrolysis (PubMed:25467444, PubMed:36493755, PubMed:35449234, PubMed:37193829). The TRiC complex mediates the folding of WRAP53/TCAB1, thereby regulating telomere maintenance (PubMed:25467444). As part of the TRiC complex may play a role in the assembly of BBSome, a complex involved in ciliogenesis regulating transports vesicles to the cilia (PubMed:20080638).</text>
</comment>
<comment type="catalytic activity">
    <reaction evidence="15 16 17">
        <text>ATP + H2O = ADP + phosphate + H(+)</text>
        <dbReference type="Rhea" id="RHEA:13065"/>
        <dbReference type="ChEBI" id="CHEBI:15377"/>
        <dbReference type="ChEBI" id="CHEBI:15378"/>
        <dbReference type="ChEBI" id="CHEBI:30616"/>
        <dbReference type="ChEBI" id="CHEBI:43474"/>
        <dbReference type="ChEBI" id="CHEBI:456216"/>
    </reaction>
</comment>
<comment type="subunit">
    <text evidence="1 3 4 5 6 7 8 9 10">Component of the chaperonin-containing T-complex (TRiC), a hexadecamer composed of two identical back-to-back stacked rings enclosing a protein folding chamber (PubMed:20080638, PubMed:25467444, PubMed:36493755, PubMed:35449234, PubMed:37193829). Each ring is made up of eight different subunits: TCP1/CCT1, CCT2, CCT3, CCT4, CCT5, CCT6A/CCT6, CCT7, CCT8 (PubMed:36493755, PubMed:35449234, PubMed:37193829). Interacts with PACRG (PubMed:14532270). Interacts with FLCN (PubMed:27353360). Interacts with DLEC1 (PubMed:33144677). Interacts with SVEP1 (By similarity).</text>
</comment>
<comment type="interaction">
    <interactant intactId="EBI-357407">
        <id>P78371</id>
    </interactant>
    <interactant intactId="EBI-1806001">
        <id>Q8IWZ6</id>
        <label>BBS7</label>
    </interactant>
    <organismsDiffer>false</organismsDiffer>
    <experiments>3</experiments>
</comment>
<comment type="interaction">
    <interactant intactId="EBI-357407">
        <id>P78371</id>
    </interactant>
    <interactant intactId="EBI-356876">
        <id>P50991</id>
        <label>CCT4</label>
    </interactant>
    <organismsDiffer>false</organismsDiffer>
    <experiments>9</experiments>
</comment>
<comment type="interaction">
    <interactant intactId="EBI-357407">
        <id>P78371</id>
    </interactant>
    <interactant intactId="EBI-355710">
        <id>P48643</id>
        <label>CCT5</label>
    </interactant>
    <organismsDiffer>false</organismsDiffer>
    <experiments>7</experiments>
</comment>
<comment type="interaction">
    <interactant intactId="EBI-357407">
        <id>P78371</id>
    </interactant>
    <interactant intactId="EBI-357046">
        <id>Q99832</id>
        <label>CCT7</label>
    </interactant>
    <organismsDiffer>false</organismsDiffer>
    <experiments>7</experiments>
</comment>
<comment type="interaction">
    <interactant intactId="EBI-357407">
        <id>P78371</id>
    </interactant>
    <interactant intactId="EBI-466029">
        <id>P42858</id>
        <label>HTT</label>
    </interactant>
    <organismsDiffer>false</organismsDiffer>
    <experiments>6</experiments>
</comment>
<comment type="interaction">
    <interactant intactId="EBI-357407">
        <id>P78371</id>
    </interactant>
    <interactant intactId="EBI-25830675">
        <id>C9J082</id>
        <label>NPHP1</label>
    </interactant>
    <organismsDiffer>false</organismsDiffer>
    <experiments>3</experiments>
</comment>
<comment type="interaction">
    <interactant intactId="EBI-357407">
        <id>P78371</id>
    </interactant>
    <interactant intactId="EBI-351098">
        <id>O14744</id>
        <label>PRMT5</label>
    </interactant>
    <organismsDiffer>false</organismsDiffer>
    <experiments>3</experiments>
</comment>
<comment type="interaction">
    <interactant intactId="EBI-357407">
        <id>P78371</id>
    </interactant>
    <interactant intactId="EBI-10272071">
        <id>Q8TAS3</id>
        <label>PRRG2</label>
    </interactant>
    <organismsDiffer>false</organismsDiffer>
    <experiments>3</experiments>
</comment>
<comment type="interaction">
    <interactant intactId="EBI-357407">
        <id>P78371</id>
    </interactant>
    <interactant intactId="EBI-1752602">
        <id>Q9UMY4</id>
        <label>SNX12</label>
    </interactant>
    <organismsDiffer>false</organismsDiffer>
    <experiments>3</experiments>
</comment>
<comment type="interaction">
    <interactant intactId="EBI-357407">
        <id>P78371</id>
    </interactant>
    <interactant intactId="EBI-356553">
        <id>P17987</id>
        <label>TCP1</label>
    </interactant>
    <organismsDiffer>false</organismsDiffer>
    <experiments>7</experiments>
</comment>
<comment type="interaction">
    <interactant intactId="EBI-357407">
        <id>P78371</id>
    </interactant>
    <interactant intactId="EBI-25830716">
        <id>O43493-5</id>
        <label>TGOLN2</label>
    </interactant>
    <organismsDiffer>false</organismsDiffer>
    <experiments>3</experiments>
</comment>
<comment type="interaction">
    <interactant intactId="EBI-357407">
        <id>P78371</id>
    </interactant>
    <interactant intactId="EBI-11337915">
        <id>Q8N0U8</id>
        <label>VKORC1L1</label>
    </interactant>
    <organismsDiffer>false</organismsDiffer>
    <experiments>3</experiments>
</comment>
<comment type="interaction">
    <interactant intactId="EBI-357407">
        <id>P78371</id>
    </interactant>
    <interactant intactId="EBI-720609">
        <id>O76024</id>
        <label>WFS1</label>
    </interactant>
    <organismsDiffer>false</organismsDiffer>
    <experiments>3</experiments>
</comment>
<comment type="interaction">
    <interactant intactId="EBI-357407">
        <id>P78371</id>
    </interactant>
    <interactant intactId="EBI-741415">
        <id>O60232</id>
        <label>ZNRD2</label>
    </interactant>
    <organismsDiffer>false</organismsDiffer>
    <experiments>6</experiments>
</comment>
<comment type="subcellular location">
    <subcellularLocation>
        <location evidence="4">Cytoplasm</location>
    </subcellularLocation>
</comment>
<comment type="alternative products">
    <event type="alternative splicing"/>
    <isoform>
        <id>P78371-1</id>
        <name>1</name>
        <sequence type="displayed"/>
    </isoform>
    <isoform>
        <id>P78371-2</id>
        <name>2</name>
        <sequence type="described" ref="VSP_042648"/>
    </isoform>
</comment>
<comment type="similarity">
    <text evidence="14">Belongs to the TCP-1 chaperonin family.</text>
</comment>
<feature type="initiator methionine" description="Removed" evidence="2 11 37 39 40 41 42">
    <location>
        <position position="1"/>
    </location>
</feature>
<feature type="chain" id="PRO_0000128316" description="T-complex protein 1 subunit beta">
    <location>
        <begin position="2"/>
        <end position="535"/>
    </location>
</feature>
<feature type="binding site" evidence="8 9 20 26 27">
    <location>
        <position position="44"/>
    </location>
    <ligand>
        <name>ADP</name>
        <dbReference type="ChEBI" id="CHEBI:456216"/>
    </ligand>
</feature>
<feature type="binding site" evidence="10 33">
    <location>
        <position position="44"/>
    </location>
    <ligand>
        <name>ATP</name>
        <dbReference type="ChEBI" id="CHEBI:30616"/>
    </ligand>
</feature>
<feature type="binding site" evidence="8 9 10 20 21 22 23 24 25 26 27 31 32">
    <location>
        <position position="97"/>
    </location>
    <ligand>
        <name>Mg(2+)</name>
        <dbReference type="ChEBI" id="CHEBI:18420"/>
    </ligand>
</feature>
<feature type="binding site" evidence="8 9 10 21 22 23 25 27 31 32">
    <location>
        <position position="98"/>
    </location>
    <ligand>
        <name>ADP</name>
        <dbReference type="ChEBI" id="CHEBI:456216"/>
    </ligand>
</feature>
<feature type="binding site" evidence="10 33">
    <location>
        <position position="98"/>
    </location>
    <ligand>
        <name>ATP</name>
        <dbReference type="ChEBI" id="CHEBI:30616"/>
    </ligand>
</feature>
<feature type="binding site" evidence="8 10 23 31 32">
    <location>
        <position position="99"/>
    </location>
    <ligand>
        <name>ADP</name>
        <dbReference type="ChEBI" id="CHEBI:456216"/>
    </ligand>
</feature>
<feature type="binding site" evidence="10 33">
    <location>
        <position position="99"/>
    </location>
    <ligand>
        <name>ATP</name>
        <dbReference type="ChEBI" id="CHEBI:30616"/>
    </ligand>
</feature>
<feature type="binding site" evidence="8 9 10 20 21 22 24 27 31 32 34">
    <location>
        <position position="100"/>
    </location>
    <ligand>
        <name>ADP</name>
        <dbReference type="ChEBI" id="CHEBI:456216"/>
    </ligand>
</feature>
<feature type="binding site" evidence="10 33">
    <location>
        <position position="100"/>
    </location>
    <ligand>
        <name>ATP</name>
        <dbReference type="ChEBI" id="CHEBI:30616"/>
    </ligand>
</feature>
<feature type="binding site" evidence="8 9 10 20 21 22 25 26 27 31 32">
    <location>
        <position position="101"/>
    </location>
    <ligand>
        <name>ADP</name>
        <dbReference type="ChEBI" id="CHEBI:456216"/>
    </ligand>
</feature>
<feature type="binding site" evidence="8 9 10 22 24 25 26 27 31 32">
    <location>
        <position position="168"/>
    </location>
    <ligand>
        <name>ADP</name>
        <dbReference type="ChEBI" id="CHEBI:456216"/>
    </ligand>
</feature>
<feature type="binding site" evidence="8 9 20 21 22 24 25 26">
    <location>
        <position position="169"/>
    </location>
    <ligand>
        <name>ADP</name>
        <dbReference type="ChEBI" id="CHEBI:456216"/>
    </ligand>
</feature>
<feature type="binding site" evidence="8 9 10 20 21 22 23 24 25 26 27 31 32">
    <location>
        <position position="410"/>
    </location>
    <ligand>
        <name>ADP</name>
        <dbReference type="ChEBI" id="CHEBI:456216"/>
    </ligand>
</feature>
<feature type="binding site" evidence="8 9 10 23 24 25 26 31 32 34">
    <location>
        <position position="495"/>
    </location>
    <ligand>
        <name>ADP</name>
        <dbReference type="ChEBI" id="CHEBI:456216"/>
    </ligand>
</feature>
<feature type="binding site" evidence="10 33">
    <location>
        <position position="495"/>
    </location>
    <ligand>
        <name>ATP</name>
        <dbReference type="ChEBI" id="CHEBI:30616"/>
    </ligand>
</feature>
<feature type="binding site" evidence="9 27">
    <location>
        <position position="500"/>
    </location>
    <ligand>
        <name>ADP</name>
        <dbReference type="ChEBI" id="CHEBI:456216"/>
    </ligand>
</feature>
<feature type="binding site" evidence="10 33">
    <location>
        <position position="500"/>
    </location>
    <ligand>
        <name>ATP</name>
        <dbReference type="ChEBI" id="CHEBI:30616"/>
    </ligand>
</feature>
<feature type="modified residue" description="N-acetylalanine" evidence="11 37 39 40 41 42">
    <location>
        <position position="2"/>
    </location>
</feature>
<feature type="modified residue" description="Phosphoserine" evidence="39 40 43">
    <location>
        <position position="3"/>
    </location>
</feature>
<feature type="modified residue" description="N6-acetyllysine" evidence="38">
    <location>
        <position position="13"/>
    </location>
</feature>
<feature type="modified residue" description="Phosphoserine" evidence="43">
    <location>
        <position position="60"/>
    </location>
</feature>
<feature type="modified residue" description="N6-acetyllysine" evidence="38">
    <location>
        <position position="154"/>
    </location>
</feature>
<feature type="modified residue" description="N6-acetyllysine" evidence="38">
    <location>
        <position position="181"/>
    </location>
</feature>
<feature type="modified residue" description="Phosphoserine" evidence="40">
    <location>
        <position position="260"/>
    </location>
</feature>
<feature type="modified residue" description="Phosphothreonine" evidence="40">
    <location>
        <position position="261"/>
    </location>
</feature>
<feature type="cross-link" description="Glycyl lysine isopeptide (Lys-Gly) (interchain with G-Cter in SUMO2)" evidence="44">
    <location>
        <position position="248"/>
    </location>
</feature>
<feature type="splice variant" id="VSP_042648" description="In isoform 2." evidence="12">
    <location>
        <begin position="1"/>
        <end position="47"/>
    </location>
</feature>
<feature type="sequence conflict" description="In Ref. 4; BAH11729." evidence="14" ref="4">
    <original>I</original>
    <variation>T</variation>
    <location>
        <position position="51"/>
    </location>
</feature>
<feature type="sequence conflict" description="In Ref. 5; CAG33352." evidence="14" ref="5">
    <original>I</original>
    <variation>T</variation>
    <location>
        <position position="126"/>
    </location>
</feature>
<feature type="sequence conflict" description="In Ref. 4; BAF83456." evidence="14" ref="4">
    <original>I</original>
    <variation>T</variation>
    <location>
        <position position="354"/>
    </location>
</feature>
<feature type="sequence conflict" description="In Ref. 4; BAH13640." evidence="14" ref="4">
    <original>S</original>
    <variation>P</variation>
    <location>
        <position position="438"/>
    </location>
</feature>
<feature type="sequence conflict" description="In Ref. 6; BAG70037/BAG70160." evidence="14" ref="6">
    <original>R</original>
    <variation>K</variation>
    <location>
        <position position="444"/>
    </location>
</feature>
<feature type="sequence conflict" description="In Ref. 5; CAG33352." evidence="14" ref="5">
    <original>L</original>
    <variation>P</variation>
    <location>
        <position position="504"/>
    </location>
</feature>
<feature type="strand" evidence="45">
    <location>
        <begin position="4"/>
        <end position="9"/>
    </location>
</feature>
<feature type="strand" evidence="48">
    <location>
        <begin position="13"/>
        <end position="15"/>
    </location>
</feature>
<feature type="strand" evidence="45">
    <location>
        <begin position="17"/>
        <end position="19"/>
    </location>
</feature>
<feature type="helix" evidence="45">
    <location>
        <begin position="21"/>
        <end position="39"/>
    </location>
</feature>
<feature type="strand" evidence="45">
    <location>
        <begin position="42"/>
        <end position="44"/>
    </location>
</feature>
<feature type="strand" evidence="45">
    <location>
        <begin position="49"/>
        <end position="51"/>
    </location>
</feature>
<feature type="strand" evidence="45">
    <location>
        <begin position="56"/>
        <end position="58"/>
    </location>
</feature>
<feature type="strand" evidence="51">
    <location>
        <begin position="61"/>
        <end position="64"/>
    </location>
</feature>
<feature type="helix" evidence="45">
    <location>
        <begin position="67"/>
        <end position="72"/>
    </location>
</feature>
<feature type="helix" evidence="45">
    <location>
        <begin position="79"/>
        <end position="94"/>
    </location>
</feature>
<feature type="strand" evidence="45">
    <location>
        <begin position="95"/>
        <end position="97"/>
    </location>
</feature>
<feature type="helix" evidence="45">
    <location>
        <begin position="99"/>
        <end position="118"/>
    </location>
</feature>
<feature type="helix" evidence="45">
    <location>
        <begin position="125"/>
        <end position="144"/>
    </location>
</feature>
<feature type="strand" evidence="45">
    <location>
        <begin position="149"/>
        <end position="151"/>
    </location>
</feature>
<feature type="helix" evidence="45">
    <location>
        <begin position="152"/>
        <end position="168"/>
    </location>
</feature>
<feature type="helix" evidence="45">
    <location>
        <begin position="171"/>
        <end position="175"/>
    </location>
</feature>
<feature type="helix" evidence="45">
    <location>
        <begin position="176"/>
        <end position="188"/>
    </location>
</feature>
<feature type="turn" evidence="45">
    <location>
        <begin position="189"/>
        <end position="192"/>
    </location>
</feature>
<feature type="strand" evidence="45">
    <location>
        <begin position="198"/>
        <end position="207"/>
    </location>
</feature>
<feature type="helix" evidence="45">
    <location>
        <begin position="209"/>
        <end position="211"/>
    </location>
</feature>
<feature type="strand" evidence="47">
    <location>
        <begin position="213"/>
        <end position="215"/>
    </location>
</feature>
<feature type="strand" evidence="45">
    <location>
        <begin position="216"/>
        <end position="220"/>
    </location>
</feature>
<feature type="strand" evidence="45">
    <location>
        <begin position="226"/>
        <end position="228"/>
    </location>
</feature>
<feature type="strand" evidence="45">
    <location>
        <begin position="232"/>
        <end position="240"/>
    </location>
</feature>
<feature type="strand" evidence="46">
    <location>
        <begin position="244"/>
        <end position="246"/>
    </location>
</feature>
<feature type="strand" evidence="45">
    <location>
        <begin position="252"/>
        <end position="259"/>
    </location>
</feature>
<feature type="helix" evidence="45">
    <location>
        <begin position="261"/>
        <end position="283"/>
    </location>
</feature>
<feature type="turn" evidence="49">
    <location>
        <begin position="284"/>
        <end position="286"/>
    </location>
</feature>
<feature type="strand" evidence="45">
    <location>
        <begin position="288"/>
        <end position="294"/>
    </location>
</feature>
<feature type="helix" evidence="45">
    <location>
        <begin position="298"/>
        <end position="307"/>
    </location>
</feature>
<feature type="strand" evidence="45">
    <location>
        <begin position="310"/>
        <end position="312"/>
    </location>
</feature>
<feature type="helix" evidence="45">
    <location>
        <begin position="317"/>
        <end position="327"/>
    </location>
</feature>
<feature type="strand" evidence="52">
    <location>
        <begin position="331"/>
        <end position="333"/>
    </location>
</feature>
<feature type="strand" evidence="50">
    <location>
        <begin position="335"/>
        <end position="337"/>
    </location>
</feature>
<feature type="helix" evidence="45">
    <location>
        <begin position="338"/>
        <end position="340"/>
    </location>
</feature>
<feature type="strand" evidence="45">
    <location>
        <begin position="344"/>
        <end position="354"/>
    </location>
</feature>
<feature type="strand" evidence="45">
    <location>
        <begin position="357"/>
        <end position="366"/>
    </location>
</feature>
<feature type="strand" evidence="45">
    <location>
        <begin position="370"/>
        <end position="379"/>
    </location>
</feature>
<feature type="helix" evidence="45">
    <location>
        <begin position="380"/>
        <end position="402"/>
    </location>
</feature>
<feature type="strand" evidence="45">
    <location>
        <begin position="405"/>
        <end position="408"/>
    </location>
</feature>
<feature type="turn" evidence="45">
    <location>
        <begin position="409"/>
        <end position="411"/>
    </location>
</feature>
<feature type="helix" evidence="45">
    <location>
        <begin position="412"/>
        <end position="427"/>
    </location>
</feature>
<feature type="helix" evidence="45">
    <location>
        <begin position="431"/>
        <end position="454"/>
    </location>
</feature>
<feature type="helix" evidence="45">
    <location>
        <begin position="458"/>
        <end position="471"/>
    </location>
</feature>
<feature type="strand" evidence="45">
    <location>
        <begin position="476"/>
        <end position="479"/>
    </location>
</feature>
<feature type="turn" evidence="45">
    <location>
        <begin position="480"/>
        <end position="483"/>
    </location>
</feature>
<feature type="strand" evidence="45">
    <location>
        <begin position="484"/>
        <end position="487"/>
    </location>
</feature>
<feature type="helix" evidence="45">
    <location>
        <begin position="488"/>
        <end position="491"/>
    </location>
</feature>
<feature type="strand" evidence="45">
    <location>
        <begin position="494"/>
        <end position="496"/>
    </location>
</feature>
<feature type="helix" evidence="45">
    <location>
        <begin position="497"/>
        <end position="515"/>
    </location>
</feature>
<feature type="strand" evidence="45">
    <location>
        <begin position="517"/>
        <end position="522"/>
    </location>
</feature>
<feature type="modified residue" description="N-acetylmethionine" evidence="42">
    <location sequence="P78371-2">
        <position position="1"/>
    </location>
</feature>
<gene>
    <name evidence="13 18" type="primary">CCT2</name>
    <name type="synonym">99D8.1</name>
    <name type="synonym">CCTB</name>
</gene>
<dbReference type="EC" id="3.6.1.-" evidence="15 16 17"/>
<dbReference type="EMBL" id="AF026293">
    <property type="protein sequence ID" value="AAC96012.1"/>
    <property type="molecule type" value="mRNA"/>
</dbReference>
<dbReference type="EMBL" id="AF026166">
    <property type="protein sequence ID" value="AAC98906.1"/>
    <property type="molecule type" value="mRNA"/>
</dbReference>
<dbReference type="EMBL" id="BT019966">
    <property type="protein sequence ID" value="AAV38769.1"/>
    <property type="molecule type" value="mRNA"/>
</dbReference>
<dbReference type="EMBL" id="AK290767">
    <property type="protein sequence ID" value="BAF83456.1"/>
    <property type="molecule type" value="mRNA"/>
</dbReference>
<dbReference type="EMBL" id="AK294307">
    <property type="protein sequence ID" value="BAH11729.1"/>
    <property type="molecule type" value="mRNA"/>
</dbReference>
<dbReference type="EMBL" id="AK302157">
    <property type="protein sequence ID" value="BAH13640.1"/>
    <property type="molecule type" value="mRNA"/>
</dbReference>
<dbReference type="EMBL" id="AK316397">
    <property type="protein sequence ID" value="BAH14768.1"/>
    <property type="molecule type" value="mRNA"/>
</dbReference>
<dbReference type="EMBL" id="AK316408">
    <property type="protein sequence ID" value="BAH14779.1"/>
    <property type="molecule type" value="mRNA"/>
</dbReference>
<dbReference type="EMBL" id="CR457071">
    <property type="protein sequence ID" value="CAG33352.1"/>
    <property type="molecule type" value="mRNA"/>
</dbReference>
<dbReference type="EMBL" id="AB451223">
    <property type="protein sequence ID" value="BAG70037.1"/>
    <property type="molecule type" value="mRNA"/>
</dbReference>
<dbReference type="EMBL" id="AB451346">
    <property type="protein sequence ID" value="BAG70160.1"/>
    <property type="molecule type" value="mRNA"/>
</dbReference>
<dbReference type="EMBL" id="AC018921">
    <property type="status" value="NOT_ANNOTATED_CDS"/>
    <property type="molecule type" value="Genomic_DNA"/>
</dbReference>
<dbReference type="EMBL" id="CH471054">
    <property type="protein sequence ID" value="EAW97230.1"/>
    <property type="molecule type" value="Genomic_DNA"/>
</dbReference>
<dbReference type="EMBL" id="BC113514">
    <property type="protein sequence ID" value="AAI13515.1"/>
    <property type="molecule type" value="mRNA"/>
</dbReference>
<dbReference type="EMBL" id="BC113516">
    <property type="protein sequence ID" value="AAI13517.1"/>
    <property type="molecule type" value="mRNA"/>
</dbReference>
<dbReference type="EMBL" id="U91327">
    <property type="protein sequence ID" value="AAB67249.1"/>
    <property type="molecule type" value="Genomic_DNA"/>
</dbReference>
<dbReference type="CCDS" id="CCDS55843.1">
    <molecule id="P78371-2"/>
</dbReference>
<dbReference type="CCDS" id="CCDS8991.1">
    <molecule id="P78371-1"/>
</dbReference>
<dbReference type="RefSeq" id="NP_001185771.1">
    <molecule id="P78371-2"/>
    <property type="nucleotide sequence ID" value="NM_001198842.2"/>
</dbReference>
<dbReference type="RefSeq" id="NP_006422.1">
    <molecule id="P78371-1"/>
    <property type="nucleotide sequence ID" value="NM_006431.3"/>
</dbReference>
<dbReference type="PDB" id="6NR8">
    <property type="method" value="EM"/>
    <property type="resolution" value="7.80 A"/>
    <property type="chains" value="B/J=16-524"/>
</dbReference>
<dbReference type="PDB" id="6NR9">
    <property type="method" value="EM"/>
    <property type="resolution" value="8.50 A"/>
    <property type="chains" value="B/J=16-524"/>
</dbReference>
<dbReference type="PDB" id="6NRA">
    <property type="method" value="EM"/>
    <property type="resolution" value="7.70 A"/>
    <property type="chains" value="B/J=16-524"/>
</dbReference>
<dbReference type="PDB" id="6NRB">
    <property type="method" value="EM"/>
    <property type="resolution" value="8.70 A"/>
    <property type="chains" value="B/J=16-524"/>
</dbReference>
<dbReference type="PDB" id="6NRC">
    <property type="method" value="EM"/>
    <property type="resolution" value="8.30 A"/>
    <property type="chains" value="B/J=16-524"/>
</dbReference>
<dbReference type="PDB" id="6NRD">
    <property type="method" value="EM"/>
    <property type="resolution" value="8.20 A"/>
    <property type="chains" value="B/J=16-524"/>
</dbReference>
<dbReference type="PDB" id="6QB8">
    <property type="method" value="EM"/>
    <property type="resolution" value="3.97 A"/>
    <property type="chains" value="B/b=1-535"/>
</dbReference>
<dbReference type="PDB" id="7LUM">
    <property type="method" value="EM"/>
    <property type="resolution" value="4.50 A"/>
    <property type="chains" value="E/M=1-535"/>
</dbReference>
<dbReference type="PDB" id="7LUP">
    <property type="method" value="EM"/>
    <property type="resolution" value="6.20 A"/>
    <property type="chains" value="E/M=1-535"/>
</dbReference>
<dbReference type="PDB" id="7NVL">
    <property type="method" value="EM"/>
    <property type="resolution" value="2.50 A"/>
    <property type="chains" value="B/b=1-535"/>
</dbReference>
<dbReference type="PDB" id="7NVM">
    <property type="method" value="EM"/>
    <property type="resolution" value="3.10 A"/>
    <property type="chains" value="B/b=1-535"/>
</dbReference>
<dbReference type="PDB" id="7NVN">
    <property type="method" value="EM"/>
    <property type="resolution" value="3.00 A"/>
    <property type="chains" value="B/b=1-535"/>
</dbReference>
<dbReference type="PDB" id="7NVO">
    <property type="method" value="EM"/>
    <property type="resolution" value="3.50 A"/>
    <property type="chains" value="B/b=1-535"/>
</dbReference>
<dbReference type="PDB" id="7TRG">
    <property type="method" value="EM"/>
    <property type="resolution" value="3.00 A"/>
    <property type="chains" value="E=1-535"/>
</dbReference>
<dbReference type="PDB" id="7TTN">
    <property type="method" value="EM"/>
    <property type="resolution" value="3.30 A"/>
    <property type="chains" value="E=1-535"/>
</dbReference>
<dbReference type="PDB" id="7TTT">
    <property type="method" value="EM"/>
    <property type="resolution" value="2.90 A"/>
    <property type="chains" value="E=1-535"/>
</dbReference>
<dbReference type="PDB" id="7TUB">
    <property type="method" value="EM"/>
    <property type="resolution" value="3.60 A"/>
    <property type="chains" value="E=1-535"/>
</dbReference>
<dbReference type="PDB" id="7WU7">
    <property type="method" value="EM"/>
    <property type="resolution" value="3.85 A"/>
    <property type="chains" value="B/J=1-535"/>
</dbReference>
<dbReference type="PDB" id="7WZ3">
    <property type="method" value="EM"/>
    <property type="resolution" value="4.10 A"/>
    <property type="chains" value="B/b=1-535"/>
</dbReference>
<dbReference type="PDB" id="7X0A">
    <property type="method" value="EM"/>
    <property type="resolution" value="3.10 A"/>
    <property type="chains" value="B/b=1-535"/>
</dbReference>
<dbReference type="PDB" id="7X0S">
    <property type="method" value="EM"/>
    <property type="resolution" value="3.10 A"/>
    <property type="chains" value="B/L=1-535"/>
</dbReference>
<dbReference type="PDB" id="7X0V">
    <property type="method" value="EM"/>
    <property type="resolution" value="3.20 A"/>
    <property type="chains" value="B/L=1-535"/>
</dbReference>
<dbReference type="PDB" id="7X3J">
    <property type="method" value="EM"/>
    <property type="resolution" value="4.20 A"/>
    <property type="chains" value="B/b=1-535"/>
</dbReference>
<dbReference type="PDB" id="7X3U">
    <property type="method" value="EM"/>
    <property type="resolution" value="3.30 A"/>
    <property type="chains" value="B/b=1-535"/>
</dbReference>
<dbReference type="PDB" id="7X6Q">
    <property type="method" value="EM"/>
    <property type="resolution" value="4.50 A"/>
    <property type="chains" value="B/L=1-535"/>
</dbReference>
<dbReference type="PDB" id="7X7Y">
    <property type="method" value="EM"/>
    <property type="resolution" value="3.80 A"/>
    <property type="chains" value="B/b=1-535"/>
</dbReference>
<dbReference type="PDB" id="8HKI">
    <property type="method" value="EM"/>
    <property type="resolution" value="3.10 A"/>
    <property type="chains" value="B/b=1-535"/>
</dbReference>
<dbReference type="PDB" id="8I1U">
    <property type="method" value="EM"/>
    <property type="resolution" value="3.24 A"/>
    <property type="chains" value="B/J=1-535"/>
</dbReference>
<dbReference type="PDB" id="8I9U">
    <property type="method" value="EM"/>
    <property type="resolution" value="3.10 A"/>
    <property type="chains" value="B/J=1-535"/>
</dbReference>
<dbReference type="PDB" id="8IB8">
    <property type="method" value="EM"/>
    <property type="resolution" value="4.42 A"/>
    <property type="chains" value="B/J=1-535"/>
</dbReference>
<dbReference type="PDB" id="8SFE">
    <property type="method" value="EM"/>
    <property type="resolution" value="3.36 A"/>
    <property type="chains" value="B/b=2-527"/>
</dbReference>
<dbReference type="PDB" id="8SFF">
    <property type="method" value="EM"/>
    <property type="resolution" value="3.20 A"/>
    <property type="chains" value="B/b=2-527"/>
</dbReference>
<dbReference type="PDB" id="8SG8">
    <property type="method" value="EM"/>
    <property type="resolution" value="3.00 A"/>
    <property type="chains" value="B/b=2-527"/>
</dbReference>
<dbReference type="PDB" id="8SG9">
    <property type="method" value="EM"/>
    <property type="resolution" value="2.90 A"/>
    <property type="chains" value="B/b=2-527"/>
</dbReference>
<dbReference type="PDB" id="8SGC">
    <property type="method" value="EM"/>
    <property type="resolution" value="2.90 A"/>
    <property type="chains" value="B/b=2-527"/>
</dbReference>
<dbReference type="PDB" id="8SGL">
    <property type="method" value="EM"/>
    <property type="resolution" value="2.90 A"/>
    <property type="chains" value="B/b=2-527"/>
</dbReference>
<dbReference type="PDB" id="8SGQ">
    <property type="method" value="EM"/>
    <property type="resolution" value="3.70 A"/>
    <property type="chains" value="B/b=2-527"/>
</dbReference>
<dbReference type="PDB" id="8SH9">
    <property type="method" value="EM"/>
    <property type="resolution" value="2.70 A"/>
    <property type="chains" value="B/b=2-527"/>
</dbReference>
<dbReference type="PDB" id="8SHA">
    <property type="method" value="EM"/>
    <property type="resolution" value="3.00 A"/>
    <property type="chains" value="B/b=2-527"/>
</dbReference>
<dbReference type="PDB" id="8SHD">
    <property type="method" value="EM"/>
    <property type="resolution" value="2.90 A"/>
    <property type="chains" value="B/b=2-527"/>
</dbReference>
<dbReference type="PDB" id="8SHE">
    <property type="method" value="EM"/>
    <property type="resolution" value="2.80 A"/>
    <property type="chains" value="B/b=2-527"/>
</dbReference>
<dbReference type="PDB" id="8SHF">
    <property type="method" value="EM"/>
    <property type="resolution" value="3.00 A"/>
    <property type="chains" value="B/b=2-527"/>
</dbReference>
<dbReference type="PDB" id="8SHG">
    <property type="method" value="EM"/>
    <property type="resolution" value="2.80 A"/>
    <property type="chains" value="B/b=2-527"/>
</dbReference>
<dbReference type="PDB" id="8SHL">
    <property type="method" value="EM"/>
    <property type="resolution" value="3.00 A"/>
    <property type="chains" value="B/b=2-527"/>
</dbReference>
<dbReference type="PDB" id="8SHN">
    <property type="method" value="EM"/>
    <property type="resolution" value="2.80 A"/>
    <property type="chains" value="B/b=2-527"/>
</dbReference>
<dbReference type="PDB" id="8SHO">
    <property type="method" value="EM"/>
    <property type="resolution" value="3.00 A"/>
    <property type="chains" value="B/b=2-527"/>
</dbReference>
<dbReference type="PDB" id="8SHP">
    <property type="method" value="EM"/>
    <property type="resolution" value="3.00 A"/>
    <property type="chains" value="B/b=2-527"/>
</dbReference>
<dbReference type="PDB" id="8SHQ">
    <property type="method" value="EM"/>
    <property type="resolution" value="2.90 A"/>
    <property type="chains" value="B/b=2-527"/>
</dbReference>
<dbReference type="PDB" id="8SHT">
    <property type="method" value="EM"/>
    <property type="resolution" value="3.00 A"/>
    <property type="chains" value="B/b=2-527"/>
</dbReference>
<dbReference type="PDBsum" id="6NR8"/>
<dbReference type="PDBsum" id="6NR9"/>
<dbReference type="PDBsum" id="6NRA"/>
<dbReference type="PDBsum" id="6NRB"/>
<dbReference type="PDBsum" id="6NRC"/>
<dbReference type="PDBsum" id="6NRD"/>
<dbReference type="PDBsum" id="6QB8"/>
<dbReference type="PDBsum" id="7LUM"/>
<dbReference type="PDBsum" id="7LUP"/>
<dbReference type="PDBsum" id="7NVL"/>
<dbReference type="PDBsum" id="7NVM"/>
<dbReference type="PDBsum" id="7NVN"/>
<dbReference type="PDBsum" id="7NVO"/>
<dbReference type="PDBsum" id="7TRG"/>
<dbReference type="PDBsum" id="7TTN"/>
<dbReference type="PDBsum" id="7TTT"/>
<dbReference type="PDBsum" id="7TUB"/>
<dbReference type="PDBsum" id="7WU7"/>
<dbReference type="PDBsum" id="7WZ3"/>
<dbReference type="PDBsum" id="7X0A"/>
<dbReference type="PDBsum" id="7X0S"/>
<dbReference type="PDBsum" id="7X0V"/>
<dbReference type="PDBsum" id="7X3J"/>
<dbReference type="PDBsum" id="7X3U"/>
<dbReference type="PDBsum" id="7X6Q"/>
<dbReference type="PDBsum" id="7X7Y"/>
<dbReference type="PDBsum" id="8HKI"/>
<dbReference type="PDBsum" id="8I1U"/>
<dbReference type="PDBsum" id="8I9U"/>
<dbReference type="PDBsum" id="8IB8"/>
<dbReference type="PDBsum" id="8SFE"/>
<dbReference type="PDBsum" id="8SFF"/>
<dbReference type="PDBsum" id="8SG8"/>
<dbReference type="PDBsum" id="8SG9"/>
<dbReference type="PDBsum" id="8SGC"/>
<dbReference type="PDBsum" id="8SGL"/>
<dbReference type="PDBsum" id="8SGQ"/>
<dbReference type="PDBsum" id="8SH9"/>
<dbReference type="PDBsum" id="8SHA"/>
<dbReference type="PDBsum" id="8SHD"/>
<dbReference type="PDBsum" id="8SHE"/>
<dbReference type="PDBsum" id="8SHF"/>
<dbReference type="PDBsum" id="8SHG"/>
<dbReference type="PDBsum" id="8SHL"/>
<dbReference type="PDBsum" id="8SHN"/>
<dbReference type="PDBsum" id="8SHO"/>
<dbReference type="PDBsum" id="8SHP"/>
<dbReference type="PDBsum" id="8SHQ"/>
<dbReference type="PDBsum" id="8SHT"/>
<dbReference type="EMDB" id="EMD-0490"/>
<dbReference type="EMDB" id="EMD-0491"/>
<dbReference type="EMDB" id="EMD-0492"/>
<dbReference type="EMDB" id="EMD-0493"/>
<dbReference type="EMDB" id="EMD-0494"/>
<dbReference type="EMDB" id="EMD-0495"/>
<dbReference type="EMDB" id="EMD-12605"/>
<dbReference type="EMDB" id="EMD-12606"/>
<dbReference type="EMDB" id="EMD-12607"/>
<dbReference type="EMDB" id="EMD-12608"/>
<dbReference type="EMDB" id="EMD-13754"/>
<dbReference type="EMDB" id="EMD-23522"/>
<dbReference type="EMDB" id="EMD-23526"/>
<dbReference type="EMDB" id="EMD-26089"/>
<dbReference type="EMDB" id="EMD-26120"/>
<dbReference type="EMDB" id="EMD-26123"/>
<dbReference type="EMDB" id="EMD-26131"/>
<dbReference type="EMDB" id="EMD-32823"/>
<dbReference type="EMDB" id="EMD-32903"/>
<dbReference type="EMDB" id="EMD-32922"/>
<dbReference type="EMDB" id="EMD-32923"/>
<dbReference type="EMDB" id="EMD-32926"/>
<dbReference type="EMDB" id="EMD-32989"/>
<dbReference type="EMDB" id="EMD-32993"/>
<dbReference type="EMDB" id="EMD-33025"/>
<dbReference type="EMDB" id="EMD-33053"/>
<dbReference type="EMDB" id="EMD-34852"/>
<dbReference type="EMDB" id="EMD-35122"/>
<dbReference type="EMDB" id="EMD-35284"/>
<dbReference type="EMDB" id="EMD-35335"/>
<dbReference type="EMDB" id="EMD-40439"/>
<dbReference type="EMDB" id="EMD-40440"/>
<dbReference type="EMDB" id="EMD-40452"/>
<dbReference type="EMDB" id="EMD-40453"/>
<dbReference type="EMDB" id="EMD-40454"/>
<dbReference type="EMDB" id="EMD-40461"/>
<dbReference type="EMDB" id="EMD-40464"/>
<dbReference type="EMDB" id="EMD-40481"/>
<dbReference type="EMDB" id="EMD-40482"/>
<dbReference type="EMDB" id="EMD-40484"/>
<dbReference type="EMDB" id="EMD-40485"/>
<dbReference type="EMDB" id="EMD-40486"/>
<dbReference type="EMDB" id="EMD-40487"/>
<dbReference type="EMDB" id="EMD-40488"/>
<dbReference type="EMDB" id="EMD-40489"/>
<dbReference type="EMDB" id="EMD-40490"/>
<dbReference type="EMDB" id="EMD-40491"/>
<dbReference type="EMDB" id="EMD-40492"/>
<dbReference type="EMDB" id="EMD-40494"/>
<dbReference type="EMDB" id="EMD-4489"/>
<dbReference type="SMR" id="P78371"/>
<dbReference type="BioGRID" id="115827">
    <property type="interactions" value="745"/>
</dbReference>
<dbReference type="ComplexPortal" id="CPX-6030">
    <property type="entry name" value="Chaperonin-containing T-complex"/>
</dbReference>
<dbReference type="CORUM" id="P78371"/>
<dbReference type="DIP" id="DIP-38123N"/>
<dbReference type="FunCoup" id="P78371">
    <property type="interactions" value="4101"/>
</dbReference>
<dbReference type="IntAct" id="P78371">
    <property type="interactions" value="420"/>
</dbReference>
<dbReference type="MINT" id="P78371"/>
<dbReference type="STRING" id="9606.ENSP00000299300"/>
<dbReference type="GlyGen" id="P78371">
    <property type="glycosylation" value="2 sites, 1 N-linked glycan (1 site), 1 O-linked glycan (1 site)"/>
</dbReference>
<dbReference type="iPTMnet" id="P78371"/>
<dbReference type="MetOSite" id="P78371"/>
<dbReference type="PhosphoSitePlus" id="P78371"/>
<dbReference type="SwissPalm" id="P78371"/>
<dbReference type="BioMuta" id="CCT2"/>
<dbReference type="DMDM" id="6094436"/>
<dbReference type="OGP" id="P78371"/>
<dbReference type="REPRODUCTION-2DPAGE" id="IPI00297779"/>
<dbReference type="CPTAC" id="CPTAC-39"/>
<dbReference type="CPTAC" id="CPTAC-40"/>
<dbReference type="jPOST" id="P78371"/>
<dbReference type="MassIVE" id="P78371"/>
<dbReference type="PaxDb" id="9606-ENSP00000299300"/>
<dbReference type="PeptideAtlas" id="P78371"/>
<dbReference type="ProteomicsDB" id="57599">
    <molecule id="P78371-1"/>
</dbReference>
<dbReference type="ProteomicsDB" id="57600">
    <molecule id="P78371-2"/>
</dbReference>
<dbReference type="Pumba" id="P78371"/>
<dbReference type="TopDownProteomics" id="P78371-1">
    <molecule id="P78371-1"/>
</dbReference>
<dbReference type="Antibodypedia" id="762">
    <property type="antibodies" value="362 antibodies from 39 providers"/>
</dbReference>
<dbReference type="DNASU" id="10576"/>
<dbReference type="Ensembl" id="ENST00000299300.11">
    <molecule id="P78371-1"/>
    <property type="protein sequence ID" value="ENSP00000299300.6"/>
    <property type="gene ID" value="ENSG00000166226.13"/>
</dbReference>
<dbReference type="Ensembl" id="ENST00000543146.2">
    <molecule id="P78371-2"/>
    <property type="protein sequence ID" value="ENSP00000445471.2"/>
    <property type="gene ID" value="ENSG00000166226.13"/>
</dbReference>
<dbReference type="GeneID" id="10576"/>
<dbReference type="KEGG" id="hsa:10576"/>
<dbReference type="MANE-Select" id="ENST00000299300.11">
    <property type="protein sequence ID" value="ENSP00000299300.6"/>
    <property type="RefSeq nucleotide sequence ID" value="NM_006431.3"/>
    <property type="RefSeq protein sequence ID" value="NP_006422.1"/>
</dbReference>
<dbReference type="UCSC" id="uc010stl.2">
    <molecule id="P78371-1"/>
    <property type="organism name" value="human"/>
</dbReference>
<dbReference type="AGR" id="HGNC:1615"/>
<dbReference type="CTD" id="10576"/>
<dbReference type="DisGeNET" id="10576"/>
<dbReference type="GeneCards" id="CCT2"/>
<dbReference type="HGNC" id="HGNC:1615">
    <property type="gene designation" value="CCT2"/>
</dbReference>
<dbReference type="HPA" id="ENSG00000166226">
    <property type="expression patterns" value="Low tissue specificity"/>
</dbReference>
<dbReference type="MalaCards" id="CCT2"/>
<dbReference type="MIM" id="605139">
    <property type="type" value="gene"/>
</dbReference>
<dbReference type="neXtProt" id="NX_P78371"/>
<dbReference type="OpenTargets" id="ENSG00000166226"/>
<dbReference type="PharmGKB" id="PA26179"/>
<dbReference type="VEuPathDB" id="HostDB:ENSG00000166226"/>
<dbReference type="eggNOG" id="KOG0363">
    <property type="taxonomic scope" value="Eukaryota"/>
</dbReference>
<dbReference type="GeneTree" id="ENSGT00550000074930"/>
<dbReference type="InParanoid" id="P78371"/>
<dbReference type="OMA" id="CAEMVMS"/>
<dbReference type="OrthoDB" id="10259763at2759"/>
<dbReference type="PAN-GO" id="P78371">
    <property type="GO annotations" value="3 GO annotations based on evolutionary models"/>
</dbReference>
<dbReference type="PhylomeDB" id="P78371"/>
<dbReference type="TreeFam" id="TF105645"/>
<dbReference type="BRENDA" id="3.6.4.B10">
    <property type="organism ID" value="2681"/>
</dbReference>
<dbReference type="PathwayCommons" id="P78371"/>
<dbReference type="Reactome" id="R-HSA-389957">
    <property type="pathway name" value="Prefoldin mediated transfer of substrate to CCT/TriC"/>
</dbReference>
<dbReference type="Reactome" id="R-HSA-389960">
    <property type="pathway name" value="Formation of tubulin folding intermediates by CCT/TriC"/>
</dbReference>
<dbReference type="Reactome" id="R-HSA-390450">
    <property type="pathway name" value="Folding of actin by CCT/TriC"/>
</dbReference>
<dbReference type="Reactome" id="R-HSA-390471">
    <property type="pathway name" value="Association of TriC/CCT with target proteins during biosynthesis"/>
</dbReference>
<dbReference type="Reactome" id="R-HSA-5620922">
    <property type="pathway name" value="BBSome-mediated cargo-targeting to cilium"/>
</dbReference>
<dbReference type="Reactome" id="R-HSA-6798695">
    <property type="pathway name" value="Neutrophil degranulation"/>
</dbReference>
<dbReference type="Reactome" id="R-HSA-6814122">
    <property type="pathway name" value="Cooperation of PDCL (PhLP1) and TRiC/CCT in G-protein beta folding"/>
</dbReference>
<dbReference type="Reactome" id="R-HSA-9013418">
    <property type="pathway name" value="RHOBTB2 GTPase cycle"/>
</dbReference>
<dbReference type="Reactome" id="R-HSA-9013422">
    <property type="pathway name" value="RHOBTB1 GTPase cycle"/>
</dbReference>
<dbReference type="SignaLink" id="P78371"/>
<dbReference type="SIGNOR" id="P78371"/>
<dbReference type="BioGRID-ORCS" id="10576">
    <property type="hits" value="815 hits in 1148 CRISPR screens"/>
</dbReference>
<dbReference type="CD-CODE" id="91857CE7">
    <property type="entry name" value="Nucleolus"/>
</dbReference>
<dbReference type="CD-CODE" id="FB4E32DD">
    <property type="entry name" value="Presynaptic clusters and postsynaptic densities"/>
</dbReference>
<dbReference type="ChiTaRS" id="CCT2">
    <property type="organism name" value="human"/>
</dbReference>
<dbReference type="GeneWiki" id="CCT2_(gene)"/>
<dbReference type="GenomeRNAi" id="10576"/>
<dbReference type="Pharos" id="P78371">
    <property type="development level" value="Tbio"/>
</dbReference>
<dbReference type="PRO" id="PR:P78371"/>
<dbReference type="Proteomes" id="UP000005640">
    <property type="component" value="Chromosome 12"/>
</dbReference>
<dbReference type="RNAct" id="P78371">
    <property type="molecule type" value="protein"/>
</dbReference>
<dbReference type="Bgee" id="ENSG00000166226">
    <property type="expression patterns" value="Expressed in sperm and 205 other cell types or tissues"/>
</dbReference>
<dbReference type="ExpressionAtlas" id="P78371">
    <property type="expression patterns" value="baseline and differential"/>
</dbReference>
<dbReference type="GO" id="GO:0035578">
    <property type="term" value="C:azurophil granule lumen"/>
    <property type="evidence" value="ECO:0000304"/>
    <property type="project" value="Reactome"/>
</dbReference>
<dbReference type="GO" id="GO:0044297">
    <property type="term" value="C:cell body"/>
    <property type="evidence" value="ECO:0007669"/>
    <property type="project" value="Ensembl"/>
</dbReference>
<dbReference type="GO" id="GO:0005832">
    <property type="term" value="C:chaperonin-containing T-complex"/>
    <property type="evidence" value="ECO:0000314"/>
    <property type="project" value="UniProtKB"/>
</dbReference>
<dbReference type="GO" id="GO:0005829">
    <property type="term" value="C:cytosol"/>
    <property type="evidence" value="ECO:0000314"/>
    <property type="project" value="HPA"/>
</dbReference>
<dbReference type="GO" id="GO:0070062">
    <property type="term" value="C:extracellular exosome"/>
    <property type="evidence" value="ECO:0007005"/>
    <property type="project" value="UniProtKB"/>
</dbReference>
<dbReference type="GO" id="GO:0005576">
    <property type="term" value="C:extracellular region"/>
    <property type="evidence" value="ECO:0000304"/>
    <property type="project" value="Reactome"/>
</dbReference>
<dbReference type="GO" id="GO:0005874">
    <property type="term" value="C:microtubule"/>
    <property type="evidence" value="ECO:0000314"/>
    <property type="project" value="UniProtKB"/>
</dbReference>
<dbReference type="GO" id="GO:0002199">
    <property type="term" value="C:zona pellucida receptor complex"/>
    <property type="evidence" value="ECO:0007669"/>
    <property type="project" value="Ensembl"/>
</dbReference>
<dbReference type="GO" id="GO:0005524">
    <property type="term" value="F:ATP binding"/>
    <property type="evidence" value="ECO:0007669"/>
    <property type="project" value="UniProtKB-KW"/>
</dbReference>
<dbReference type="GO" id="GO:0016887">
    <property type="term" value="F:ATP hydrolysis activity"/>
    <property type="evidence" value="ECO:0007669"/>
    <property type="project" value="InterPro"/>
</dbReference>
<dbReference type="GO" id="GO:0140662">
    <property type="term" value="F:ATP-dependent protein folding chaperone"/>
    <property type="evidence" value="ECO:0007669"/>
    <property type="project" value="InterPro"/>
</dbReference>
<dbReference type="GO" id="GO:0044183">
    <property type="term" value="F:protein folding chaperone"/>
    <property type="evidence" value="ECO:0000314"/>
    <property type="project" value="BHF-UCL"/>
</dbReference>
<dbReference type="GO" id="GO:0031625">
    <property type="term" value="F:ubiquitin protein ligase binding"/>
    <property type="evidence" value="ECO:0000353"/>
    <property type="project" value="ParkinsonsUK-UCL"/>
</dbReference>
<dbReference type="GO" id="GO:0051082">
    <property type="term" value="F:unfolded protein binding"/>
    <property type="evidence" value="ECO:0000318"/>
    <property type="project" value="GO_Central"/>
</dbReference>
<dbReference type="GO" id="GO:0007339">
    <property type="term" value="P:binding of sperm to zona pellucida"/>
    <property type="evidence" value="ECO:0007669"/>
    <property type="project" value="Ensembl"/>
</dbReference>
<dbReference type="GO" id="GO:0051086">
    <property type="term" value="P:chaperone mediated protein folding independent of cofactor"/>
    <property type="evidence" value="ECO:0000315"/>
    <property type="project" value="BHF-UCL"/>
</dbReference>
<dbReference type="GO" id="GO:0051131">
    <property type="term" value="P:chaperone-mediated protein complex assembly"/>
    <property type="evidence" value="ECO:0000315"/>
    <property type="project" value="MGI"/>
</dbReference>
<dbReference type="GO" id="GO:0061077">
    <property type="term" value="P:chaperone-mediated protein folding"/>
    <property type="evidence" value="ECO:0000314"/>
    <property type="project" value="ComplexPortal"/>
</dbReference>
<dbReference type="GO" id="GO:1904871">
    <property type="term" value="P:positive regulation of protein localization to Cajal body"/>
    <property type="evidence" value="ECO:0007001"/>
    <property type="project" value="BHF-UCL"/>
</dbReference>
<dbReference type="GO" id="GO:1904874">
    <property type="term" value="P:positive regulation of telomerase RNA localization to Cajal body"/>
    <property type="evidence" value="ECO:0000315"/>
    <property type="project" value="BHF-UCL"/>
</dbReference>
<dbReference type="GO" id="GO:0032212">
    <property type="term" value="P:positive regulation of telomere maintenance via telomerase"/>
    <property type="evidence" value="ECO:0000315"/>
    <property type="project" value="BHF-UCL"/>
</dbReference>
<dbReference type="GO" id="GO:0006457">
    <property type="term" value="P:protein folding"/>
    <property type="evidence" value="ECO:0000314"/>
    <property type="project" value="FlyBase"/>
</dbReference>
<dbReference type="GO" id="GO:0050821">
    <property type="term" value="P:protein stabilization"/>
    <property type="evidence" value="ECO:0000315"/>
    <property type="project" value="BHF-UCL"/>
</dbReference>
<dbReference type="GO" id="GO:0090666">
    <property type="term" value="P:scaRNA localization to Cajal body"/>
    <property type="evidence" value="ECO:0000315"/>
    <property type="project" value="BHF-UCL"/>
</dbReference>
<dbReference type="CDD" id="cd03336">
    <property type="entry name" value="TCP1_beta"/>
    <property type="match status" value="1"/>
</dbReference>
<dbReference type="FunFam" id="3.30.260.10:FF:000046">
    <property type="entry name" value="Chaperonin containing TCP1 subunit 2"/>
    <property type="match status" value="1"/>
</dbReference>
<dbReference type="FunFam" id="3.50.7.10:FF:000002">
    <property type="entry name" value="T-complex protein 1 subunit beta"/>
    <property type="match status" value="1"/>
</dbReference>
<dbReference type="FunFam" id="1.10.560.10:FF:000017">
    <property type="entry name" value="T-complex protein 1 subunit eta"/>
    <property type="match status" value="1"/>
</dbReference>
<dbReference type="FunFam" id="1.10.560.10:FF:000045">
    <property type="entry name" value="T-complex protein 1 subunit eta"/>
    <property type="match status" value="1"/>
</dbReference>
<dbReference type="Gene3D" id="3.50.7.10">
    <property type="entry name" value="GroEL"/>
    <property type="match status" value="1"/>
</dbReference>
<dbReference type="Gene3D" id="1.10.560.10">
    <property type="entry name" value="GroEL-like equatorial domain"/>
    <property type="match status" value="1"/>
</dbReference>
<dbReference type="Gene3D" id="3.30.260.10">
    <property type="entry name" value="TCP-1-like chaperonin intermediate domain"/>
    <property type="match status" value="1"/>
</dbReference>
<dbReference type="InterPro" id="IPR012716">
    <property type="entry name" value="Chap_CCT_beta"/>
</dbReference>
<dbReference type="InterPro" id="IPR017998">
    <property type="entry name" value="Chaperone_TCP-1"/>
</dbReference>
<dbReference type="InterPro" id="IPR002194">
    <property type="entry name" value="Chaperonin_TCP-1_CS"/>
</dbReference>
<dbReference type="InterPro" id="IPR002423">
    <property type="entry name" value="Cpn60/GroEL/TCP-1"/>
</dbReference>
<dbReference type="InterPro" id="IPR027409">
    <property type="entry name" value="GroEL-like_apical_dom_sf"/>
</dbReference>
<dbReference type="InterPro" id="IPR027413">
    <property type="entry name" value="GROEL-like_equatorial_sf"/>
</dbReference>
<dbReference type="InterPro" id="IPR027410">
    <property type="entry name" value="TCP-1-like_intermed_sf"/>
</dbReference>
<dbReference type="InterPro" id="IPR053374">
    <property type="entry name" value="TCP-1_chaperonin"/>
</dbReference>
<dbReference type="NCBIfam" id="TIGR02341">
    <property type="entry name" value="chap_CCT_beta"/>
    <property type="match status" value="1"/>
</dbReference>
<dbReference type="NCBIfam" id="NF041083">
    <property type="entry name" value="thermosome_beta"/>
    <property type="match status" value="1"/>
</dbReference>
<dbReference type="PANTHER" id="PTHR11353">
    <property type="entry name" value="CHAPERONIN"/>
    <property type="match status" value="1"/>
</dbReference>
<dbReference type="Pfam" id="PF00118">
    <property type="entry name" value="Cpn60_TCP1"/>
    <property type="match status" value="1"/>
</dbReference>
<dbReference type="PRINTS" id="PR00304">
    <property type="entry name" value="TCOMPLEXTCP1"/>
</dbReference>
<dbReference type="SUPFAM" id="SSF52029">
    <property type="entry name" value="GroEL apical domain-like"/>
    <property type="match status" value="1"/>
</dbReference>
<dbReference type="SUPFAM" id="SSF48592">
    <property type="entry name" value="GroEL equatorial domain-like"/>
    <property type="match status" value="1"/>
</dbReference>
<dbReference type="SUPFAM" id="SSF54849">
    <property type="entry name" value="GroEL-intermediate domain like"/>
    <property type="match status" value="1"/>
</dbReference>
<dbReference type="PROSITE" id="PS00750">
    <property type="entry name" value="TCP1_1"/>
    <property type="match status" value="1"/>
</dbReference>
<dbReference type="PROSITE" id="PS00751">
    <property type="entry name" value="TCP1_2"/>
    <property type="match status" value="1"/>
</dbReference>
<dbReference type="PROSITE" id="PS00995">
    <property type="entry name" value="TCP1_3"/>
    <property type="match status" value="1"/>
</dbReference>
<keyword id="KW-0002">3D-structure</keyword>
<keyword id="KW-0007">Acetylation</keyword>
<keyword id="KW-0025">Alternative splicing</keyword>
<keyword id="KW-0067">ATP-binding</keyword>
<keyword id="KW-0143">Chaperone</keyword>
<keyword id="KW-0963">Cytoplasm</keyword>
<keyword id="KW-0903">Direct protein sequencing</keyword>
<keyword id="KW-0378">Hydrolase</keyword>
<keyword id="KW-1017">Isopeptide bond</keyword>
<keyword id="KW-0547">Nucleotide-binding</keyword>
<keyword id="KW-0597">Phosphoprotein</keyword>
<keyword id="KW-1267">Proteomics identification</keyword>
<keyword id="KW-1185">Reference proteome</keyword>
<keyword id="KW-0832">Ubl conjugation</keyword>
<evidence type="ECO:0000250" key="1">
    <source>
        <dbReference type="UniProtKB" id="P80314"/>
    </source>
</evidence>
<evidence type="ECO:0000269" key="2">
    <source>
    </source>
</evidence>
<evidence type="ECO:0000269" key="3">
    <source>
    </source>
</evidence>
<evidence type="ECO:0000269" key="4">
    <source>
    </source>
</evidence>
<evidence type="ECO:0000269" key="5">
    <source>
    </source>
</evidence>
<evidence type="ECO:0000269" key="6">
    <source>
    </source>
</evidence>
<evidence type="ECO:0000269" key="7">
    <source>
    </source>
</evidence>
<evidence type="ECO:0000269" key="8">
    <source>
    </source>
</evidence>
<evidence type="ECO:0000269" key="9">
    <source>
    </source>
</evidence>
<evidence type="ECO:0000269" key="10">
    <source>
    </source>
</evidence>
<evidence type="ECO:0000269" key="11">
    <source ref="12"/>
</evidence>
<evidence type="ECO:0000303" key="12">
    <source>
    </source>
</evidence>
<evidence type="ECO:0000303" key="13">
    <source>
    </source>
</evidence>
<evidence type="ECO:0000305" key="14"/>
<evidence type="ECO:0000305" key="15">
    <source>
    </source>
</evidence>
<evidence type="ECO:0000305" key="16">
    <source>
    </source>
</evidence>
<evidence type="ECO:0000305" key="17">
    <source>
    </source>
</evidence>
<evidence type="ECO:0000312" key="18">
    <source>
        <dbReference type="HGNC" id="HGNC:1615"/>
    </source>
</evidence>
<evidence type="ECO:0000312" key="19">
    <source>
        <dbReference type="MIM" id="605139"/>
    </source>
</evidence>
<evidence type="ECO:0007744" key="20">
    <source>
        <dbReference type="PDB" id="7NVL"/>
    </source>
</evidence>
<evidence type="ECO:0007744" key="21">
    <source>
        <dbReference type="PDB" id="7NVM"/>
    </source>
</evidence>
<evidence type="ECO:0007744" key="22">
    <source>
        <dbReference type="PDB" id="7NVN"/>
    </source>
</evidence>
<evidence type="ECO:0007744" key="23">
    <source>
        <dbReference type="PDB" id="7NVO"/>
    </source>
</evidence>
<evidence type="ECO:0007744" key="24">
    <source>
        <dbReference type="PDB" id="7TRG"/>
    </source>
</evidence>
<evidence type="ECO:0007744" key="25">
    <source>
        <dbReference type="PDB" id="7TTN"/>
    </source>
</evidence>
<evidence type="ECO:0007744" key="26">
    <source>
        <dbReference type="PDB" id="7TTT"/>
    </source>
</evidence>
<evidence type="ECO:0007744" key="27">
    <source>
        <dbReference type="PDB" id="7TUB"/>
    </source>
</evidence>
<evidence type="ECO:0007744" key="28">
    <source>
        <dbReference type="PDB" id="7WU7"/>
    </source>
</evidence>
<evidence type="ECO:0007744" key="29">
    <source>
        <dbReference type="PDB" id="7WZ3"/>
    </source>
</evidence>
<evidence type="ECO:0007744" key="30">
    <source>
        <dbReference type="PDB" id="7X0A"/>
    </source>
</evidence>
<evidence type="ECO:0007744" key="31">
    <source>
        <dbReference type="PDB" id="7X0S"/>
    </source>
</evidence>
<evidence type="ECO:0007744" key="32">
    <source>
        <dbReference type="PDB" id="7X0V"/>
    </source>
</evidence>
<evidence type="ECO:0007744" key="33">
    <source>
        <dbReference type="PDB" id="7X3J"/>
    </source>
</evidence>
<evidence type="ECO:0007744" key="34">
    <source>
        <dbReference type="PDB" id="7X3U"/>
    </source>
</evidence>
<evidence type="ECO:0007744" key="35">
    <source>
        <dbReference type="PDB" id="7X6Q"/>
    </source>
</evidence>
<evidence type="ECO:0007744" key="36">
    <source>
        <dbReference type="PDB" id="7X7Y"/>
    </source>
</evidence>
<evidence type="ECO:0007744" key="37">
    <source>
    </source>
</evidence>
<evidence type="ECO:0007744" key="38">
    <source>
    </source>
</evidence>
<evidence type="ECO:0007744" key="39">
    <source>
    </source>
</evidence>
<evidence type="ECO:0007744" key="40">
    <source>
    </source>
</evidence>
<evidence type="ECO:0007744" key="41">
    <source>
    </source>
</evidence>
<evidence type="ECO:0007744" key="42">
    <source>
    </source>
</evidence>
<evidence type="ECO:0007744" key="43">
    <source>
    </source>
</evidence>
<evidence type="ECO:0007744" key="44">
    <source>
    </source>
</evidence>
<evidence type="ECO:0007829" key="45">
    <source>
        <dbReference type="PDB" id="7NVL"/>
    </source>
</evidence>
<evidence type="ECO:0007829" key="46">
    <source>
        <dbReference type="PDB" id="7TTT"/>
    </source>
</evidence>
<evidence type="ECO:0007829" key="47">
    <source>
        <dbReference type="PDB" id="7X0A"/>
    </source>
</evidence>
<evidence type="ECO:0007829" key="48">
    <source>
        <dbReference type="PDB" id="7X0S"/>
    </source>
</evidence>
<evidence type="ECO:0007829" key="49">
    <source>
        <dbReference type="PDB" id="8I1U"/>
    </source>
</evidence>
<evidence type="ECO:0007829" key="50">
    <source>
        <dbReference type="PDB" id="8SFE"/>
    </source>
</evidence>
<evidence type="ECO:0007829" key="51">
    <source>
        <dbReference type="PDB" id="8SH9"/>
    </source>
</evidence>
<evidence type="ECO:0007829" key="52">
    <source>
        <dbReference type="PDB" id="8SHT"/>
    </source>
</evidence>